<sequence>MTTASTSQVRQNYHQDSEAAINRQINLELYASYVYLSMSYYFDRDDVALKNFAKYFLHQSHEEREHAEKLMKLQNQRGGRIFLQDIKKPDCDDWESGLNAMECALHLEKNVNQSLLELHKLATDKNDPHLCDFIETHYLNEQVKAIKELGDHVTNLRKMGAPESGLAEYLFDKHTLGDSDNES</sequence>
<accession>P02794</accession>
<accession>B3KNR5</accession>
<accession>Q3KRA8</accession>
<accession>Q3SWW1</accession>
<organism>
    <name type="scientific">Homo sapiens</name>
    <name type="common">Human</name>
    <dbReference type="NCBI Taxonomy" id="9606"/>
    <lineage>
        <taxon>Eukaryota</taxon>
        <taxon>Metazoa</taxon>
        <taxon>Chordata</taxon>
        <taxon>Craniata</taxon>
        <taxon>Vertebrata</taxon>
        <taxon>Euteleostomi</taxon>
        <taxon>Mammalia</taxon>
        <taxon>Eutheria</taxon>
        <taxon>Euarchontoglires</taxon>
        <taxon>Primates</taxon>
        <taxon>Haplorrhini</taxon>
        <taxon>Catarrhini</taxon>
        <taxon>Hominidae</taxon>
        <taxon>Homo</taxon>
    </lineage>
</organism>
<dbReference type="EC" id="1.16.3.1" evidence="8"/>
<dbReference type="EMBL" id="X00318">
    <property type="protein sequence ID" value="CAA25086.1"/>
    <property type="molecule type" value="mRNA"/>
</dbReference>
<dbReference type="EMBL" id="M11146">
    <property type="protein sequence ID" value="AAA52437.1"/>
    <property type="molecule type" value="mRNA"/>
</dbReference>
<dbReference type="EMBL" id="M12937">
    <property type="protein sequence ID" value="AAA35830.1"/>
    <property type="molecule type" value="mRNA"/>
</dbReference>
<dbReference type="EMBL" id="X03487">
    <property type="protein sequence ID" value="CAA27205.1"/>
    <property type="molecule type" value="Genomic_DNA"/>
</dbReference>
<dbReference type="EMBL" id="X03488">
    <property type="protein sequence ID" value="CAA27205.1"/>
    <property type="status" value="JOINED"/>
    <property type="molecule type" value="Genomic_DNA"/>
</dbReference>
<dbReference type="EMBL" id="M14212">
    <property type="protein sequence ID" value="AAA52438.1"/>
    <property type="molecule type" value="Genomic_DNA"/>
</dbReference>
<dbReference type="EMBL" id="M14211">
    <property type="protein sequence ID" value="AAA52438.1"/>
    <property type="status" value="JOINED"/>
    <property type="molecule type" value="Genomic_DNA"/>
</dbReference>
<dbReference type="EMBL" id="M97164">
    <property type="protein sequence ID" value="AAA35832.1"/>
    <property type="molecule type" value="mRNA"/>
</dbReference>
<dbReference type="EMBL" id="L20941">
    <property type="protein sequence ID" value="AAA35833.1"/>
    <property type="molecule type" value="mRNA"/>
</dbReference>
<dbReference type="EMBL" id="AF088851">
    <property type="protein sequence ID" value="AAF89523.1"/>
    <property type="molecule type" value="mRNA"/>
</dbReference>
<dbReference type="EMBL" id="AY258285">
    <property type="protein sequence ID" value="AAP82230.1"/>
    <property type="molecule type" value="mRNA"/>
</dbReference>
<dbReference type="EMBL" id="AB062402">
    <property type="protein sequence ID" value="BAB93489.1"/>
    <property type="molecule type" value="mRNA"/>
</dbReference>
<dbReference type="EMBL" id="AK054816">
    <property type="protein sequence ID" value="BAG51427.1"/>
    <property type="molecule type" value="mRNA"/>
</dbReference>
<dbReference type="EMBL" id="DQ496108">
    <property type="protein sequence ID" value="ABF47097.1"/>
    <property type="molecule type" value="Genomic_DNA"/>
</dbReference>
<dbReference type="EMBL" id="CH471076">
    <property type="protein sequence ID" value="EAW73989.1"/>
    <property type="molecule type" value="Genomic_DNA"/>
</dbReference>
<dbReference type="EMBL" id="BC000857">
    <property type="protein sequence ID" value="AAH00857.1"/>
    <property type="molecule type" value="mRNA"/>
</dbReference>
<dbReference type="EMBL" id="BC001399">
    <property type="protein sequence ID" value="AAH01399.1"/>
    <property type="molecule type" value="mRNA"/>
</dbReference>
<dbReference type="EMBL" id="BC011359">
    <property type="protein sequence ID" value="AAH11359.1"/>
    <property type="molecule type" value="mRNA"/>
</dbReference>
<dbReference type="EMBL" id="BC013724">
    <property type="protein sequence ID" value="AAH13724.1"/>
    <property type="molecule type" value="mRNA"/>
</dbReference>
<dbReference type="EMBL" id="BC015156">
    <property type="protein sequence ID" value="AAH15156.1"/>
    <property type="molecule type" value="mRNA"/>
</dbReference>
<dbReference type="EMBL" id="BC016009">
    <property type="protein sequence ID" value="AAH16009.1"/>
    <property type="molecule type" value="mRNA"/>
</dbReference>
<dbReference type="EMBL" id="BC016857">
    <property type="protein sequence ID" value="AAH16857.1"/>
    <property type="molecule type" value="mRNA"/>
</dbReference>
<dbReference type="EMBL" id="BC063514">
    <property type="protein sequence ID" value="AAH63514.1"/>
    <property type="molecule type" value="mRNA"/>
</dbReference>
<dbReference type="EMBL" id="BC066961">
    <property type="protein sequence ID" value="AAH66961.1"/>
    <property type="molecule type" value="mRNA"/>
</dbReference>
<dbReference type="EMBL" id="BC073750">
    <property type="protein sequence ID" value="AAH73750.1"/>
    <property type="molecule type" value="mRNA"/>
</dbReference>
<dbReference type="EMBL" id="BC104643">
    <property type="protein sequence ID" value="AAI04644.1"/>
    <property type="molecule type" value="mRNA"/>
</dbReference>
<dbReference type="EMBL" id="BC105802">
    <property type="protein sequence ID" value="AAI05803.1"/>
    <property type="status" value="ALT_INIT"/>
    <property type="molecule type" value="mRNA"/>
</dbReference>
<dbReference type="EMBL" id="M15383">
    <property type="protein sequence ID" value="AAA52479.1"/>
    <property type="molecule type" value="mRNA"/>
</dbReference>
<dbReference type="CCDS" id="CCDS41655.1"/>
<dbReference type="PIR" id="A23517">
    <property type="entry name" value="FRHUH"/>
</dbReference>
<dbReference type="RefSeq" id="NP_002023.2">
    <property type="nucleotide sequence ID" value="NM_002032.3"/>
</dbReference>
<dbReference type="PDB" id="1FHA">
    <property type="method" value="X-ray"/>
    <property type="resolution" value="2.40 A"/>
    <property type="chains" value="A=1-183"/>
</dbReference>
<dbReference type="PDB" id="2CEI">
    <property type="method" value="X-ray"/>
    <property type="resolution" value="1.80 A"/>
    <property type="chains" value="A=2-183"/>
</dbReference>
<dbReference type="PDB" id="2CHI">
    <property type="method" value="X-ray"/>
    <property type="resolution" value="1.60 A"/>
    <property type="chains" value="A=2-183"/>
</dbReference>
<dbReference type="PDB" id="2CIH">
    <property type="method" value="X-ray"/>
    <property type="resolution" value="1.50 A"/>
    <property type="chains" value="A=2-183"/>
</dbReference>
<dbReference type="PDB" id="2CLU">
    <property type="method" value="X-ray"/>
    <property type="resolution" value="2.10 A"/>
    <property type="chains" value="A=2-183"/>
</dbReference>
<dbReference type="PDB" id="2CN6">
    <property type="method" value="X-ray"/>
    <property type="resolution" value="2.20 A"/>
    <property type="chains" value="A=2-183"/>
</dbReference>
<dbReference type="PDB" id="2CN7">
    <property type="method" value="X-ray"/>
    <property type="resolution" value="1.75 A"/>
    <property type="chains" value="A=2-183"/>
</dbReference>
<dbReference type="PDB" id="2FHA">
    <property type="method" value="X-ray"/>
    <property type="resolution" value="1.90 A"/>
    <property type="chains" value="A=1-183"/>
</dbReference>
<dbReference type="PDB" id="2IU2">
    <property type="method" value="X-ray"/>
    <property type="resolution" value="1.80 A"/>
    <property type="chains" value="A=2-183"/>
</dbReference>
<dbReference type="PDB" id="2Z6M">
    <property type="method" value="X-ray"/>
    <property type="resolution" value="2.72 A"/>
    <property type="chains" value="A/B/C/D/E/F/G/H/I/J/K/L=2-177"/>
</dbReference>
<dbReference type="PDB" id="3AJO">
    <property type="method" value="X-ray"/>
    <property type="resolution" value="1.52 A"/>
    <property type="chains" value="A=2-183"/>
</dbReference>
<dbReference type="PDB" id="3AJP">
    <property type="method" value="X-ray"/>
    <property type="resolution" value="1.90 A"/>
    <property type="chains" value="A=2-183"/>
</dbReference>
<dbReference type="PDB" id="3AJQ">
    <property type="method" value="X-ray"/>
    <property type="resolution" value="1.58 A"/>
    <property type="chains" value="A=2-183"/>
</dbReference>
<dbReference type="PDB" id="3ERZ">
    <property type="method" value="X-ray"/>
    <property type="resolution" value="3.06 A"/>
    <property type="chains" value="A/B/C/D/E/F/G/H/I/J/K/L=1-183"/>
</dbReference>
<dbReference type="PDB" id="3ES3">
    <property type="method" value="X-ray"/>
    <property type="resolution" value="2.79 A"/>
    <property type="chains" value="A=1-183"/>
</dbReference>
<dbReference type="PDB" id="4DYX">
    <property type="method" value="X-ray"/>
    <property type="resolution" value="1.85 A"/>
    <property type="chains" value="A=6-177"/>
</dbReference>
<dbReference type="PDB" id="4DYY">
    <property type="method" value="X-ray"/>
    <property type="resolution" value="1.90 A"/>
    <property type="chains" value="A=6-177"/>
</dbReference>
<dbReference type="PDB" id="4DYZ">
    <property type="method" value="X-ray"/>
    <property type="resolution" value="2.30 A"/>
    <property type="chains" value="A=6-177"/>
</dbReference>
<dbReference type="PDB" id="4DZ0">
    <property type="method" value="X-ray"/>
    <property type="resolution" value="2.50 A"/>
    <property type="chains" value="A=6-177"/>
</dbReference>
<dbReference type="PDB" id="4OYN">
    <property type="method" value="X-ray"/>
    <property type="resolution" value="1.43 A"/>
    <property type="chains" value="A=1-183"/>
</dbReference>
<dbReference type="PDB" id="4Y08">
    <property type="method" value="X-ray"/>
    <property type="resolution" value="1.34 A"/>
    <property type="chains" value="A=1-183"/>
</dbReference>
<dbReference type="PDB" id="4YKH">
    <property type="method" value="X-ray"/>
    <property type="resolution" value="1.52 A"/>
    <property type="chains" value="A=1-183"/>
</dbReference>
<dbReference type="PDB" id="4ZJK">
    <property type="method" value="X-ray"/>
    <property type="resolution" value="1.56 A"/>
    <property type="chains" value="A=2-183"/>
</dbReference>
<dbReference type="PDB" id="5CMQ">
    <property type="method" value="X-ray"/>
    <property type="resolution" value="1.94 A"/>
    <property type="chains" value="A=2-183"/>
</dbReference>
<dbReference type="PDB" id="5CMR">
    <property type="method" value="X-ray"/>
    <property type="resolution" value="3.79 A"/>
    <property type="chains" value="A=2-183"/>
</dbReference>
<dbReference type="PDB" id="5GN8">
    <property type="method" value="X-ray"/>
    <property type="resolution" value="2.81 A"/>
    <property type="chains" value="A=2-183, B=2-153"/>
</dbReference>
<dbReference type="PDB" id="5GOU">
    <property type="method" value="X-ray"/>
    <property type="resolution" value="2.91 A"/>
    <property type="chains" value="A/B/C/D/E/F/G/H/I/J/K/L/M/N/O/P=1-183"/>
</dbReference>
<dbReference type="PDB" id="5JKK">
    <property type="method" value="X-ray"/>
    <property type="resolution" value="1.60 A"/>
    <property type="chains" value="A/B/C/D/E/F/G/H=1-183"/>
</dbReference>
<dbReference type="PDB" id="5JKL">
    <property type="method" value="X-ray"/>
    <property type="resolution" value="1.80 A"/>
    <property type="chains" value="A/B/C/D/E/F/G/H/I/J/K/L=1-183"/>
</dbReference>
<dbReference type="PDB" id="5JKM">
    <property type="method" value="X-ray"/>
    <property type="resolution" value="1.80 A"/>
    <property type="chains" value="A/B/C/D/E/F/G/H/I/J/K/L=1-183"/>
</dbReference>
<dbReference type="PDB" id="5N26">
    <property type="method" value="X-ray"/>
    <property type="resolution" value="2.05 A"/>
    <property type="chains" value="A=2-183"/>
</dbReference>
<dbReference type="PDB" id="5N27">
    <property type="method" value="X-ray"/>
    <property type="resolution" value="1.74 A"/>
    <property type="chains" value="A=2-183"/>
</dbReference>
<dbReference type="PDB" id="5UP7">
    <property type="method" value="X-ray"/>
    <property type="resolution" value="1.79 A"/>
    <property type="chains" value="A=2-183"/>
</dbReference>
<dbReference type="PDB" id="5UP8">
    <property type="method" value="X-ray"/>
    <property type="resolution" value="2.63 A"/>
    <property type="chains" value="A=2-183"/>
</dbReference>
<dbReference type="PDB" id="5UP9">
    <property type="method" value="X-ray"/>
    <property type="resolution" value="2.45 A"/>
    <property type="chains" value="A/B/C/D/E/F=2-183"/>
</dbReference>
<dbReference type="PDB" id="5VTD">
    <property type="method" value="X-ray"/>
    <property type="resolution" value="1.95 A"/>
    <property type="chains" value="A=2-183"/>
</dbReference>
<dbReference type="PDB" id="5XB1">
    <property type="method" value="EM"/>
    <property type="resolution" value="3.00 A"/>
    <property type="chains" value="A/B/C/D/E/F/G/H/I/J/K/L/M/N/O/P/Q/R/S/T/U/V/W/X=1-160"/>
</dbReference>
<dbReference type="PDB" id="5YI5">
    <property type="method" value="EM"/>
    <property type="resolution" value="3.00 A"/>
    <property type="chains" value="A/B/C/D/E/F/G/H/I/J/K/L/M/N/O/P/Q/R/S/T/U/V/W/X=1-177"/>
</dbReference>
<dbReference type="PDB" id="5ZND">
    <property type="method" value="X-ray"/>
    <property type="resolution" value="3.00 A"/>
    <property type="chains" value="A=1-134"/>
</dbReference>
<dbReference type="PDB" id="6B8F">
    <property type="method" value="X-ray"/>
    <property type="resolution" value="1.06 A"/>
    <property type="chains" value="A=2-183"/>
</dbReference>
<dbReference type="PDB" id="6B8G">
    <property type="method" value="X-ray"/>
    <property type="resolution" value="1.13 A"/>
    <property type="chains" value="A=2-183"/>
</dbReference>
<dbReference type="PDB" id="6FTV">
    <property type="method" value="X-ray"/>
    <property type="resolution" value="1.58 A"/>
    <property type="chains" value="A=2-183"/>
</dbReference>
<dbReference type="PDB" id="6GSR">
    <property type="method" value="EM"/>
    <property type="resolution" value="5.50 A"/>
    <property type="chains" value="Aa/Ac/Ad/Ae/Af/Ag/Ah/Ai/Aj/Ak/Al/Am/An/Ao/Ap/Ar/As/At/Au/Av/Aw/Ax/Ay/Az=2-183"/>
</dbReference>
<dbReference type="PDB" id="6H5I">
    <property type="method" value="EM"/>
    <property type="resolution" value="3.90 A"/>
    <property type="chains" value="Aa/Ac/Ad/Ae/Af/Ag/Ah/Ai/Aj/Ak/Al/Am/An/Ao/Ap/Ar/As/At/Au/Av/Aw/Ax/Ay/Az=6-177"/>
</dbReference>
<dbReference type="PDB" id="6H6T">
    <property type="method" value="X-ray"/>
    <property type="resolution" value="1.90 A"/>
    <property type="chains" value="A/B/C/D/E/F/G/H/I/J/K/L=1-183"/>
</dbReference>
<dbReference type="PDB" id="6H6U">
    <property type="method" value="X-ray"/>
    <property type="resolution" value="2.00 A"/>
    <property type="chains" value="A/B/C/D/E/F=1-183"/>
</dbReference>
<dbReference type="PDB" id="6IPC">
    <property type="method" value="X-ray"/>
    <property type="resolution" value="4.44 A"/>
    <property type="chains" value="A/B/C/D/E/F/G/H/I/J/K/L/M/N/O/P=2-183"/>
</dbReference>
<dbReference type="PDB" id="6IPO">
    <property type="method" value="X-ray"/>
    <property type="resolution" value="3.00 A"/>
    <property type="chains" value="A/B=2-183"/>
</dbReference>
<dbReference type="PDB" id="6IPP">
    <property type="method" value="X-ray"/>
    <property type="resolution" value="2.70 A"/>
    <property type="chains" value="A/B=2-183"/>
</dbReference>
<dbReference type="PDB" id="6IPQ">
    <property type="method" value="X-ray"/>
    <property type="resolution" value="3.10 A"/>
    <property type="chains" value="A=2-183"/>
</dbReference>
<dbReference type="PDB" id="6J4A">
    <property type="method" value="X-ray"/>
    <property type="resolution" value="3.99 A"/>
    <property type="chains" value="A/B/C/D/E/F/G/H/I/J/K/L=1-183"/>
</dbReference>
<dbReference type="PDB" id="6J7G">
    <property type="method" value="X-ray"/>
    <property type="resolution" value="3.87 A"/>
    <property type="chains" value="A/B/C/D/G/H/I/J/M/N/O/P/Q/R/S/T/W/X/Y/Z/a/b/e/f=2-183"/>
</dbReference>
<dbReference type="PDB" id="6JOB">
    <property type="method" value="Other"/>
    <property type="resolution" value="2.93 A"/>
    <property type="chains" value="A/B/C/D/E/F/G/H/I/J/K/L=1-183"/>
</dbReference>
<dbReference type="PDB" id="6JPS">
    <property type="method" value="X-ray"/>
    <property type="resolution" value="3.50 A"/>
    <property type="chains" value="A/B/C/D/E/F/G/H/I/J/K/L/M/N/O/P/Q/R/S/T/U/V/W/X=2-183"/>
</dbReference>
<dbReference type="PDB" id="6KE2">
    <property type="method" value="X-ray"/>
    <property type="resolution" value="1.80 A"/>
    <property type="chains" value="A=1-183"/>
</dbReference>
<dbReference type="PDB" id="6KE4">
    <property type="method" value="X-ray"/>
    <property type="resolution" value="2.30 A"/>
    <property type="chains" value="A=1-183"/>
</dbReference>
<dbReference type="PDB" id="6M52">
    <property type="method" value="EM"/>
    <property type="resolution" value="2.60 A"/>
    <property type="chains" value="A/B/C/D/E/F/G/H/I/J/K/L/M/N/O/P/Q/R/S/T/U/V/W/X=1-183"/>
</dbReference>
<dbReference type="PDB" id="6M54">
    <property type="method" value="EM"/>
    <property type="resolution" value="2.40 A"/>
    <property type="chains" value="A/B/C/D/E/F/G/H/I/J/K/L/M/N/O/P/Q/R/S/T/U/V/W/X=1-183"/>
</dbReference>
<dbReference type="PDB" id="6WYF">
    <property type="method" value="X-ray"/>
    <property type="resolution" value="1.25 A"/>
    <property type="chains" value="A=2-183"/>
</dbReference>
<dbReference type="PDB" id="6WYG">
    <property type="method" value="X-ray"/>
    <property type="resolution" value="2.27 A"/>
    <property type="chains" value="A/B/C/D=2-183"/>
</dbReference>
<dbReference type="PDB" id="6WYH">
    <property type="method" value="X-ray"/>
    <property type="resolution" value="2.22 A"/>
    <property type="chains" value="A/B/C/D=2-183"/>
</dbReference>
<dbReference type="PDB" id="6Z6U">
    <property type="method" value="EM"/>
    <property type="resolution" value="1.25 A"/>
    <property type="chains" value="1/2/4/6/A/B/E/F/G/H/I/K/M/O/P/Q/S/U/W/X/Y/a/e/r=1-183"/>
</dbReference>
<dbReference type="PDB" id="6Z9E">
    <property type="method" value="EM"/>
    <property type="resolution" value="1.55 A"/>
    <property type="chains" value="1/2/4/6/A/B/E/F/G/H/I/K/M/O/P/Q/S/U/W/X/Y/a/e/r=1-183"/>
</dbReference>
<dbReference type="PDB" id="6Z9F">
    <property type="method" value="EM"/>
    <property type="resolution" value="1.56 A"/>
    <property type="chains" value="1/2/4/6/A/B/E/F/G/H/I/K/M/O/P/Q/S/U/W/X/Y/a/e/r=1-183"/>
</dbReference>
<dbReference type="PDB" id="7A6A">
    <property type="method" value="EM"/>
    <property type="resolution" value="1.15 A"/>
    <property type="chains" value="1/2/4/6/A/B/E/F/G/H/I/K/M/O/P/Q/S/U/W/X/Y/a/e/r=1-183"/>
</dbReference>
<dbReference type="PDB" id="7A6B">
    <property type="method" value="EM"/>
    <property type="resolution" value="1.33 A"/>
    <property type="chains" value="1/2/4/6/A/B/E/F/G/H/I/K/M/O/P/Q/S/U/W/X/Y/a/e/r=1-183"/>
</dbReference>
<dbReference type="PDB" id="7CK8">
    <property type="method" value="X-ray"/>
    <property type="resolution" value="1.80 A"/>
    <property type="chains" value="A/B/C/D/E/F/G/H/I/J/K/L=5-177"/>
</dbReference>
<dbReference type="PDB" id="7CK9">
    <property type="method" value="X-ray"/>
    <property type="resolution" value="1.60 A"/>
    <property type="chains" value="A=6-177"/>
</dbReference>
<dbReference type="PDB" id="7JGK">
    <property type="method" value="X-ray"/>
    <property type="resolution" value="2.68 A"/>
    <property type="chains" value="A=2-183"/>
</dbReference>
<dbReference type="PDB" id="7JGL">
    <property type="method" value="X-ray"/>
    <property type="resolution" value="2.34 A"/>
    <property type="chains" value="A/B/C/D/E/F/G/H/I/J/K/L/M/N/O/P/Q/R/S/T/U/V/W/X/a/b/c/d/e/f=2-183"/>
</dbReference>
<dbReference type="PDB" id="7JGM">
    <property type="method" value="X-ray"/>
    <property type="resolution" value="2.31 A"/>
    <property type="chains" value="A/B/C/D/E/F/G/H/I/J/K/L/M/N/O/P/Q/R/S/T/U/V/W/X/a/b/c/d/e/f=2-183"/>
</dbReference>
<dbReference type="PDB" id="7JGN">
    <property type="method" value="X-ray"/>
    <property type="resolution" value="2.07 A"/>
    <property type="chains" value="A/B/C/D/E/F/G/H/I/J/K/L/M/N/O/P/Q/R/S/T/U/V/W/X/a/b/c/d/e/f=2-183"/>
</dbReference>
<dbReference type="PDB" id="7JGO">
    <property type="method" value="X-ray"/>
    <property type="resolution" value="3.08 A"/>
    <property type="chains" value="A=2-183"/>
</dbReference>
<dbReference type="PDB" id="7JGP">
    <property type="method" value="X-ray"/>
    <property type="resolution" value="6.42 A"/>
    <property type="chains" value="A=2-183"/>
</dbReference>
<dbReference type="PDB" id="7JGQ">
    <property type="method" value="X-ray"/>
    <property type="resolution" value="3.01 A"/>
    <property type="chains" value="A=2-183"/>
</dbReference>
<dbReference type="PDB" id="7K26">
    <property type="method" value="X-ray"/>
    <property type="resolution" value="2.70 A"/>
    <property type="chains" value="A/B/C/D/E/F/G/H/I/J/K/L=2-183"/>
</dbReference>
<dbReference type="PDB" id="7K3V">
    <property type="method" value="EM"/>
    <property type="resolution" value="1.34 A"/>
    <property type="chains" value="A/B/C/D/E/F/G/H/I/J/K/L/M/N/O/P/Q/R/S/T/U/V/W/X=6-177"/>
</dbReference>
<dbReference type="PDB" id="7K3W">
    <property type="method" value="EM"/>
    <property type="resolution" value="1.36 A"/>
    <property type="chains" value="A/B/C/D/E/F/G/H/I/J/K/L/M/N/O/P/Q/R/S/T/U/V/W/X=6-177"/>
</dbReference>
<dbReference type="PDB" id="7KE3">
    <property type="method" value="X-ray"/>
    <property type="resolution" value="2.20 A"/>
    <property type="chains" value="A/B/C/D/E/F/G/H/I/J/K/L=1-183"/>
</dbReference>
<dbReference type="PDB" id="7KE5">
    <property type="method" value="X-ray"/>
    <property type="resolution" value="2.80 A"/>
    <property type="chains" value="A/B/C/D/E/F/G/H/I/J/K/L=2-183"/>
</dbReference>
<dbReference type="PDB" id="7PF1">
    <property type="method" value="EM"/>
    <property type="resolution" value="2.10 A"/>
    <property type="chains" value="A/B/C/D/E/F/G/H/I/J/K/L/M/N/O/P/Q/R/S/T/U/V/W/X=4-177"/>
</dbReference>
<dbReference type="PDB" id="7R5O">
    <property type="method" value="EM"/>
    <property type="resolution" value="1.60 A"/>
    <property type="chains" value="A/B/C/D/E/F/G/H/I/J/K/L/M/N/O/P/Q/R/S/T/U/V/W/X=5-177"/>
</dbReference>
<dbReference type="PDB" id="7RRP">
    <property type="method" value="EM"/>
    <property type="resolution" value="1.27 A"/>
    <property type="chains" value="A/B/C/D/E/F/G/H/I/J/K/L/M/N/O/P/Q/R/S/T/U/V/W/X=6-177"/>
</dbReference>
<dbReference type="PDB" id="7V66">
    <property type="method" value="EM"/>
    <property type="resolution" value="1.89 A"/>
    <property type="chains" value="A/B/C/D/E/F/G/H/I/J/K/L/M/N/O/P/Q/R/S/T/U/V/W/X=6-177"/>
</dbReference>
<dbReference type="PDB" id="7VD8">
    <property type="method" value="EM"/>
    <property type="resolution" value="1.96 A"/>
    <property type="chains" value="A/B/C/D/E/F/G/H/I/J/K/L/M/N/O/P/Q/R/S/T/U/V/W/X=6-177"/>
</dbReference>
<dbReference type="PDB" id="7ZG7">
    <property type="method" value="EM"/>
    <property type="resolution" value="1.77 A"/>
    <property type="chains" value="A/B/C/D/E/F/G/H/I/J/K/L/M/N/O/P/Q/R/S/T/U/V/W/X=6-177"/>
</dbReference>
<dbReference type="PDB" id="8A2L">
    <property type="method" value="X-ray"/>
    <property type="resolution" value="2.30 A"/>
    <property type="chains" value="AAA=2-183"/>
</dbReference>
<dbReference type="PDB" id="8A2M">
    <property type="method" value="X-ray"/>
    <property type="resolution" value="1.57 A"/>
    <property type="chains" value="AAA=2-183"/>
</dbReference>
<dbReference type="PDB" id="8A5N">
    <property type="method" value="X-ray"/>
    <property type="resolution" value="1.52 A"/>
    <property type="chains" value="AAA=2-183"/>
</dbReference>
<dbReference type="PDB" id="8AAV">
    <property type="method" value="X-ray"/>
    <property type="resolution" value="2.00 A"/>
    <property type="chains" value="A/B/C/D/E/F/G/H=2-183"/>
</dbReference>
<dbReference type="PDB" id="8B7O">
    <property type="method" value="X-ray"/>
    <property type="resolution" value="1.17 A"/>
    <property type="chains" value="AAA=2-183"/>
</dbReference>
<dbReference type="PDB" id="8CPM">
    <property type="method" value="EM"/>
    <property type="resolution" value="1.81 A"/>
    <property type="chains" value="1/2/4/6/A/B/E/F/G/H/I/K/M/O/P/Q/S/U/W/X/Y/a/e/r=5-177"/>
</dbReference>
<dbReference type="PDB" id="8CPS">
    <property type="method" value="EM"/>
    <property type="resolution" value="1.82 A"/>
    <property type="chains" value="1/2/4/6/A/B/E/F/G/H/I/K/M/O/P/Q/S/U/W/X/Y/a/e/r=5-177"/>
</dbReference>
<dbReference type="PDB" id="8CPT">
    <property type="method" value="EM"/>
    <property type="resolution" value="1.79 A"/>
    <property type="chains" value="1/2/4/6/A/B/E/F/G/H/I/K/M/O/P/Q/S/U/W/X/Y/a/e/r=5-177"/>
</dbReference>
<dbReference type="PDB" id="8CPU">
    <property type="method" value="EM"/>
    <property type="resolution" value="1.76 A"/>
    <property type="chains" value="1/2/4/6/A/B/E/F/G/H/I/K/M/O/P/Q/S/U/W/X/Y/a/e/r=5-177"/>
</dbReference>
<dbReference type="PDB" id="8CPV">
    <property type="method" value="EM"/>
    <property type="resolution" value="1.76 A"/>
    <property type="chains" value="1/2/4/6/A/B/E/F/G/H/I/K/M/O/P/Q/S/U/W/X/Y/a/e/r=5-177"/>
</dbReference>
<dbReference type="PDB" id="8CPW">
    <property type="method" value="EM"/>
    <property type="resolution" value="1.79 A"/>
    <property type="chains" value="1/2/4/6/A/B/E/F/G/H/I/K/M/O/P/Q/S/U/W/X/Y/a/e/r=5-177"/>
</dbReference>
<dbReference type="PDB" id="8CPX">
    <property type="method" value="EM"/>
    <property type="resolution" value="1.76 A"/>
    <property type="chains" value="1/2/4/6/A/B/E/F/G/H/I/K/M/O/P/Q/S/U/W/X/Y/a/e/r=5-177"/>
</dbReference>
<dbReference type="PDB" id="8DHX">
    <property type="method" value="EM"/>
    <property type="resolution" value="2.92 A"/>
    <property type="chains" value="1/2/4/6/A/B/E/F/G/H/I/K/M/O/P/Q/S/U/W/X/Y/a/e/r=1-183"/>
</dbReference>
<dbReference type="PDB" id="8DNP">
    <property type="method" value="EM"/>
    <property type="resolution" value="2.69 A"/>
    <property type="chains" value="A/B/C/D/E/F/G/H/I/J/K/L/M/N/O/P/Q/R/S/T/U/V/W/X=1-183"/>
</dbReference>
<dbReference type="PDB" id="8F49">
    <property type="method" value="EM"/>
    <property type="resolution" value="1.80 A"/>
    <property type="chains" value="A/B/C/D/E/F/G/H/I/J/K/L/M/N/O/P/Q/R/S/T/U/V/W/X=6-177"/>
</dbReference>
<dbReference type="PDB" id="8F4L">
    <property type="method" value="EM"/>
    <property type="resolution" value="2.40 A"/>
    <property type="chains" value="A/B/C/D/E/F/G/H/I/J/K/L/M/N/O/P/Q/R/S/T/U/V/W/X=6-177"/>
</dbReference>
<dbReference type="PDB" id="8HHS">
    <property type="method" value="EM"/>
    <property type="resolution" value="2.40 A"/>
    <property type="chains" value="A/B/C/D/E/F/G/H/I/J/K/L/M/N/O/P/Q/R/S/T/U/V/W/X=6-177"/>
</dbReference>
<dbReference type="PDB" id="8J9L">
    <property type="method" value="X-ray"/>
    <property type="resolution" value="2.50 A"/>
    <property type="chains" value="A/B/C/D/E/F/G/H/I/J/K/L=1-183"/>
</dbReference>
<dbReference type="PDB" id="8J9M">
    <property type="method" value="X-ray"/>
    <property type="resolution" value="2.90 A"/>
    <property type="chains" value="A/B/C=1-183"/>
</dbReference>
<dbReference type="PDB" id="8JAI">
    <property type="method" value="X-ray"/>
    <property type="resolution" value="2.56 A"/>
    <property type="chains" value="A/B/C/D/E/F/G/H/I/J/K/L/M/N/O/P/Q/R/S/T/U/V/W/X=1-183"/>
</dbReference>
<dbReference type="PDB" id="8KFD">
    <property type="method" value="X-ray"/>
    <property type="resolution" value="1.80 A"/>
    <property type="chains" value="A=2-183"/>
</dbReference>
<dbReference type="PDB" id="8PP2">
    <property type="method" value="X-ray"/>
    <property type="resolution" value="2.00 A"/>
    <property type="chains" value="A/B/C/D/E/F/G/H/I/J/K/L=6-177"/>
</dbReference>
<dbReference type="PDB" id="8PP3">
    <property type="method" value="X-ray"/>
    <property type="resolution" value="1.55 A"/>
    <property type="chains" value="A/B/C/D/E/F/G/H/I/J/K/L=1-183"/>
</dbReference>
<dbReference type="PDB" id="8PP5">
    <property type="method" value="X-ray"/>
    <property type="resolution" value="2.00 A"/>
    <property type="chains" value="A/B/C/D/E/F=6-177"/>
</dbReference>
<dbReference type="PDB" id="8QU9">
    <property type="method" value="EM"/>
    <property type="resolution" value="2.88 A"/>
    <property type="chains" value="A=6-183"/>
</dbReference>
<dbReference type="PDB" id="8W92">
    <property type="method" value="X-ray"/>
    <property type="resolution" value="2.12 A"/>
    <property type="chains" value="A=1-183"/>
</dbReference>
<dbReference type="PDB" id="8WB3">
    <property type="method" value="X-ray"/>
    <property type="resolution" value="2.49 A"/>
    <property type="chains" value="A=1-183"/>
</dbReference>
<dbReference type="PDB" id="8WIE">
    <property type="method" value="X-ray"/>
    <property type="resolution" value="2.30 A"/>
    <property type="chains" value="A/B/C/D/E/F=1-177"/>
</dbReference>
<dbReference type="PDB" id="8WIQ">
    <property type="method" value="EM"/>
    <property type="resolution" value="2.19 A"/>
    <property type="chains" value="A/B/C/D/E/F/G/H/I/J/K/L/M/N/O/P/Q/R/S/T/U/V/W/X=1-183"/>
</dbReference>
<dbReference type="PDB" id="8WJF">
    <property type="method" value="EM"/>
    <property type="resolution" value="2.02 A"/>
    <property type="chains" value="A/B/C/D/E/F/G/H/I/J/K/L/M/N/O/P/Q/R/S/T/U/V/W/X=1-183"/>
</dbReference>
<dbReference type="PDB" id="8XWB">
    <property type="method" value="X-ray"/>
    <property type="resolution" value="1.69 A"/>
    <property type="chains" value="A=6-177"/>
</dbReference>
<dbReference type="PDB" id="8Y6F">
    <property type="method" value="X-ray"/>
    <property type="resolution" value="2.01 A"/>
    <property type="chains" value="A/B/C/D/E/F/G/H/I/J/K/L=1-182"/>
</dbReference>
<dbReference type="PDB" id="9JIU">
    <property type="method" value="X-ray"/>
    <property type="resolution" value="2.28 A"/>
    <property type="chains" value="A/B/C/D/E/F/G/H/I/J/K/L=1-183"/>
</dbReference>
<dbReference type="PDB" id="9JQB">
    <property type="method" value="EM"/>
    <property type="resolution" value="1.78 A"/>
    <property type="chains" value="A/B/C/D/E/F/G/H/I/J/K/L/M/N/O/P/Q/R/S/T/U/V/W/X=1-183"/>
</dbReference>
<dbReference type="PDB" id="9JQC">
    <property type="method" value="EM"/>
    <property type="resolution" value="1.73 A"/>
    <property type="chains" value="A/B/C/D/E/F/G/H/I/J/K/L/M/N/O/P/Q/R/S/T/U/V/W/X=1-183"/>
</dbReference>
<dbReference type="PDB" id="9JQD">
    <property type="method" value="EM"/>
    <property type="resolution" value="1.81 A"/>
    <property type="chains" value="A/B/C/D/E/F/G/H/I/J/K/L/M/N/O/P/Q/R/S/T/U/V/W/X=1-183"/>
</dbReference>
<dbReference type="PDB" id="9JQE">
    <property type="method" value="EM"/>
    <property type="resolution" value="1.83 A"/>
    <property type="chains" value="A/B/C/D/E/F/G/H/I/J/K/L/M/N/O/P/Q/R/S/T/U/V/W/X=1-183"/>
</dbReference>
<dbReference type="PDB" id="9KAY">
    <property type="method" value="EM"/>
    <property type="resolution" value="1.73 A"/>
    <property type="chains" value="Aa/Ab/Ac/Ad/Ae/Af/Ag/Ah/Ai/Aj/Ak/Al/Am/An/Ao/Ap/Aq/Ar/As/At/Au/Av/Aw/Ax=2-160"/>
</dbReference>
<dbReference type="PDBsum" id="1FHA"/>
<dbReference type="PDBsum" id="2CEI"/>
<dbReference type="PDBsum" id="2CHI"/>
<dbReference type="PDBsum" id="2CIH"/>
<dbReference type="PDBsum" id="2CLU"/>
<dbReference type="PDBsum" id="2CN6"/>
<dbReference type="PDBsum" id="2CN7"/>
<dbReference type="PDBsum" id="2FHA"/>
<dbReference type="PDBsum" id="2IU2"/>
<dbReference type="PDBsum" id="2Z6M"/>
<dbReference type="PDBsum" id="3AJO"/>
<dbReference type="PDBsum" id="3AJP"/>
<dbReference type="PDBsum" id="3AJQ"/>
<dbReference type="PDBsum" id="3ERZ"/>
<dbReference type="PDBsum" id="3ES3"/>
<dbReference type="PDBsum" id="4DYX"/>
<dbReference type="PDBsum" id="4DYY"/>
<dbReference type="PDBsum" id="4DYZ"/>
<dbReference type="PDBsum" id="4DZ0"/>
<dbReference type="PDBsum" id="4OYN"/>
<dbReference type="PDBsum" id="4Y08"/>
<dbReference type="PDBsum" id="4YKH"/>
<dbReference type="PDBsum" id="4ZJK"/>
<dbReference type="PDBsum" id="5CMQ"/>
<dbReference type="PDBsum" id="5CMR"/>
<dbReference type="PDBsum" id="5GN8"/>
<dbReference type="PDBsum" id="5GOU"/>
<dbReference type="PDBsum" id="5JKK"/>
<dbReference type="PDBsum" id="5JKL"/>
<dbReference type="PDBsum" id="5JKM"/>
<dbReference type="PDBsum" id="5N26"/>
<dbReference type="PDBsum" id="5N27"/>
<dbReference type="PDBsum" id="5UP7"/>
<dbReference type="PDBsum" id="5UP8"/>
<dbReference type="PDBsum" id="5UP9"/>
<dbReference type="PDBsum" id="5VTD"/>
<dbReference type="PDBsum" id="5XB1"/>
<dbReference type="PDBsum" id="5YI5"/>
<dbReference type="PDBsum" id="5ZND"/>
<dbReference type="PDBsum" id="6B8F"/>
<dbReference type="PDBsum" id="6B8G"/>
<dbReference type="PDBsum" id="6FTV"/>
<dbReference type="PDBsum" id="6GSR"/>
<dbReference type="PDBsum" id="6H5I"/>
<dbReference type="PDBsum" id="6H6T"/>
<dbReference type="PDBsum" id="6H6U"/>
<dbReference type="PDBsum" id="6IPC"/>
<dbReference type="PDBsum" id="6IPO"/>
<dbReference type="PDBsum" id="6IPP"/>
<dbReference type="PDBsum" id="6IPQ"/>
<dbReference type="PDBsum" id="6J4A"/>
<dbReference type="PDBsum" id="6J7G"/>
<dbReference type="PDBsum" id="6JOB"/>
<dbReference type="PDBsum" id="6JPS"/>
<dbReference type="PDBsum" id="6KE2"/>
<dbReference type="PDBsum" id="6KE4"/>
<dbReference type="PDBsum" id="6M52"/>
<dbReference type="PDBsum" id="6M54"/>
<dbReference type="PDBsum" id="6WYF"/>
<dbReference type="PDBsum" id="6WYG"/>
<dbReference type="PDBsum" id="6WYH"/>
<dbReference type="PDBsum" id="6Z6U"/>
<dbReference type="PDBsum" id="6Z9E"/>
<dbReference type="PDBsum" id="6Z9F"/>
<dbReference type="PDBsum" id="7A6A"/>
<dbReference type="PDBsum" id="7A6B"/>
<dbReference type="PDBsum" id="7CK8"/>
<dbReference type="PDBsum" id="7CK9"/>
<dbReference type="PDBsum" id="7JGK"/>
<dbReference type="PDBsum" id="7JGL"/>
<dbReference type="PDBsum" id="7JGM"/>
<dbReference type="PDBsum" id="7JGN"/>
<dbReference type="PDBsum" id="7JGO"/>
<dbReference type="PDBsum" id="7JGP"/>
<dbReference type="PDBsum" id="7JGQ"/>
<dbReference type="PDBsum" id="7K26"/>
<dbReference type="PDBsum" id="7K3V"/>
<dbReference type="PDBsum" id="7K3W"/>
<dbReference type="PDBsum" id="7KE3"/>
<dbReference type="PDBsum" id="7KE5"/>
<dbReference type="PDBsum" id="7PF1"/>
<dbReference type="PDBsum" id="7R5O"/>
<dbReference type="PDBsum" id="7RRP"/>
<dbReference type="PDBsum" id="7V66"/>
<dbReference type="PDBsum" id="7VD8"/>
<dbReference type="PDBsum" id="7ZG7"/>
<dbReference type="PDBsum" id="8A2L"/>
<dbReference type="PDBsum" id="8A2M"/>
<dbReference type="PDBsum" id="8A5N"/>
<dbReference type="PDBsum" id="8AAV"/>
<dbReference type="PDBsum" id="8B7O"/>
<dbReference type="PDBsum" id="8CPM"/>
<dbReference type="PDBsum" id="8CPS"/>
<dbReference type="PDBsum" id="8CPT"/>
<dbReference type="PDBsum" id="8CPU"/>
<dbReference type="PDBsum" id="8CPV"/>
<dbReference type="PDBsum" id="8CPW"/>
<dbReference type="PDBsum" id="8CPX"/>
<dbReference type="PDBsum" id="8DHX"/>
<dbReference type="PDBsum" id="8DNP"/>
<dbReference type="PDBsum" id="8F49"/>
<dbReference type="PDBsum" id="8F4L"/>
<dbReference type="PDBsum" id="8HHS"/>
<dbReference type="PDBsum" id="8J9L"/>
<dbReference type="PDBsum" id="8J9M"/>
<dbReference type="PDBsum" id="8JAI"/>
<dbReference type="PDBsum" id="8KFD"/>
<dbReference type="PDBsum" id="8PP2"/>
<dbReference type="PDBsum" id="8PP3"/>
<dbReference type="PDBsum" id="8PP5"/>
<dbReference type="PDBsum" id="8QU9"/>
<dbReference type="PDBsum" id="8W92"/>
<dbReference type="PDBsum" id="8WB3"/>
<dbReference type="PDBsum" id="8WIE"/>
<dbReference type="PDBsum" id="8WIQ"/>
<dbReference type="PDBsum" id="8WJF"/>
<dbReference type="PDBsum" id="8XWB"/>
<dbReference type="PDBsum" id="8Y6F"/>
<dbReference type="PDBsum" id="9JIU"/>
<dbReference type="PDBsum" id="9JQB"/>
<dbReference type="PDBsum" id="9JQC"/>
<dbReference type="PDBsum" id="9JQD"/>
<dbReference type="PDBsum" id="9JQE"/>
<dbReference type="PDBsum" id="9KAY"/>
<dbReference type="EMDB" id="EMD-0046"/>
<dbReference type="EMDB" id="EMD-0140"/>
<dbReference type="EMDB" id="EMD-11103"/>
<dbReference type="EMDB" id="EMD-11121"/>
<dbReference type="EMDB" id="EMD-11122"/>
<dbReference type="EMDB" id="EMD-11668"/>
<dbReference type="EMDB" id="EMD-11669"/>
<dbReference type="EMDB" id="EMD-13364"/>
<dbReference type="EMDB" id="EMD-14332"/>
<dbReference type="EMDB" id="EMD-14705"/>
<dbReference type="EMDB" id="EMD-16783"/>
<dbReference type="EMDB" id="EMD-16784"/>
<dbReference type="EMDB" id="EMD-16785"/>
<dbReference type="EMDB" id="EMD-16786"/>
<dbReference type="EMDB" id="EMD-16787"/>
<dbReference type="EMDB" id="EMD-16788"/>
<dbReference type="EMDB" id="EMD-16789"/>
<dbReference type="EMDB" id="EMD-18658"/>
<dbReference type="EMDB" id="EMD-22657"/>
<dbReference type="EMDB" id="EMD-22658"/>
<dbReference type="EMDB" id="EMD-24665"/>
<dbReference type="EMDB" id="EMD-27437"/>
<dbReference type="EMDB" id="EMD-27576"/>
<dbReference type="EMDB" id="EMD-30083"/>
<dbReference type="EMDB" id="EMD-30084"/>
<dbReference type="EMDB" id="EMD-31736"/>
<dbReference type="EMDB" id="EMD-31910"/>
<dbReference type="EMDB" id="EMD-37566"/>
<dbReference type="EMDB" id="EMD-37578"/>
<dbReference type="EMDB" id="EMD-3853"/>
<dbReference type="EMDB" id="EMD-3854"/>
<dbReference type="EMDB" id="EMD-61726"/>
<dbReference type="EMDB" id="EMD-61727"/>
<dbReference type="EMDB" id="EMD-61728"/>
<dbReference type="EMDB" id="EMD-61729"/>
<dbReference type="EMDB" id="EMD-62216"/>
<dbReference type="EMDB" id="EMD-6714"/>
<dbReference type="EMDB" id="EMD-6830"/>
<dbReference type="SMR" id="P02794"/>
<dbReference type="BioGRID" id="108773">
    <property type="interactions" value="176"/>
</dbReference>
<dbReference type="CORUM" id="P02794"/>
<dbReference type="DIP" id="DIP-38301N"/>
<dbReference type="FunCoup" id="P02794">
    <property type="interactions" value="167"/>
</dbReference>
<dbReference type="IntAct" id="P02794">
    <property type="interactions" value="136"/>
</dbReference>
<dbReference type="MINT" id="P02794"/>
<dbReference type="STRING" id="9606.ENSP00000273550"/>
<dbReference type="DrugBank" id="DB13995">
    <property type="generic name" value="Ferric pyrophosphate citrate"/>
</dbReference>
<dbReference type="DrugBank" id="DB14490">
    <property type="generic name" value="Ferrous ascorbate"/>
</dbReference>
<dbReference type="DrugBank" id="DB14491">
    <property type="generic name" value="Ferrous fumarate"/>
</dbReference>
<dbReference type="DrugBank" id="DB14488">
    <property type="generic name" value="Ferrous gluconate"/>
</dbReference>
<dbReference type="DrugBank" id="DB14501">
    <property type="generic name" value="Ferrous glycine sulfate"/>
</dbReference>
<dbReference type="DrugBank" id="DB14489">
    <property type="generic name" value="Ferrous succinate"/>
</dbReference>
<dbReference type="DrugBank" id="DB06784">
    <property type="generic name" value="Gallium citrate Ga-67"/>
</dbReference>
<dbReference type="DrugBank" id="DB01592">
    <property type="generic name" value="Iron"/>
</dbReference>
<dbReference type="DrugBank" id="DB00893">
    <property type="generic name" value="Iron Dextran"/>
</dbReference>
<dbReference type="GlyGen" id="P02794">
    <property type="glycosylation" value="3 sites, 2 N-linked glycans (1 site), 1 O-linked glycan (2 sites)"/>
</dbReference>
<dbReference type="iPTMnet" id="P02794"/>
<dbReference type="PhosphoSitePlus" id="P02794"/>
<dbReference type="SwissPalm" id="P02794"/>
<dbReference type="BioMuta" id="FTH1"/>
<dbReference type="DMDM" id="120516"/>
<dbReference type="jPOST" id="P02794"/>
<dbReference type="MassIVE" id="P02794"/>
<dbReference type="PaxDb" id="9606-ENSP00000273550"/>
<dbReference type="PeptideAtlas" id="P02794"/>
<dbReference type="ProteomicsDB" id="51600"/>
<dbReference type="Pumba" id="P02794"/>
<dbReference type="TopDownProteomics" id="P02794"/>
<dbReference type="ABCD" id="P02794">
    <property type="antibodies" value="5 sequenced antibodies"/>
</dbReference>
<dbReference type="Antibodypedia" id="28385">
    <property type="antibodies" value="884 antibodies from 41 providers"/>
</dbReference>
<dbReference type="DNASU" id="2495"/>
<dbReference type="Ensembl" id="ENST00000273550.12">
    <property type="protein sequence ID" value="ENSP00000273550.7"/>
    <property type="gene ID" value="ENSG00000167996.16"/>
</dbReference>
<dbReference type="Ensembl" id="ENST00000620041.5">
    <property type="protein sequence ID" value="ENSP00000484477.1"/>
    <property type="gene ID" value="ENSG00000167996.16"/>
</dbReference>
<dbReference type="GeneID" id="2495"/>
<dbReference type="KEGG" id="hsa:2495"/>
<dbReference type="MANE-Select" id="ENST00000273550.12">
    <property type="protein sequence ID" value="ENSP00000273550.7"/>
    <property type="RefSeq nucleotide sequence ID" value="NM_002032.3"/>
    <property type="RefSeq protein sequence ID" value="NP_002023.2"/>
</dbReference>
<dbReference type="UCSC" id="uc001nsu.3">
    <property type="organism name" value="human"/>
</dbReference>
<dbReference type="AGR" id="HGNC:3976"/>
<dbReference type="CTD" id="2495"/>
<dbReference type="DisGeNET" id="2495"/>
<dbReference type="GeneCards" id="FTH1"/>
<dbReference type="HGNC" id="HGNC:3976">
    <property type="gene designation" value="FTH1"/>
</dbReference>
<dbReference type="HPA" id="ENSG00000167996">
    <property type="expression patterns" value="Low tissue specificity"/>
</dbReference>
<dbReference type="MalaCards" id="FTH1"/>
<dbReference type="MIM" id="134770">
    <property type="type" value="gene"/>
</dbReference>
<dbReference type="MIM" id="615517">
    <property type="type" value="phenotype"/>
</dbReference>
<dbReference type="MIM" id="620669">
    <property type="type" value="phenotype"/>
</dbReference>
<dbReference type="neXtProt" id="NX_P02794"/>
<dbReference type="OpenTargets" id="ENSG00000167996"/>
<dbReference type="Orphanet" id="247790">
    <property type="disease" value="FTH1-related iron overload"/>
</dbReference>
<dbReference type="PharmGKB" id="PA28392"/>
<dbReference type="VEuPathDB" id="HostDB:ENSG00000167996"/>
<dbReference type="eggNOG" id="KOG2332">
    <property type="taxonomic scope" value="Eukaryota"/>
</dbReference>
<dbReference type="GeneTree" id="ENSGT00950000182841"/>
<dbReference type="HOGENOM" id="CLU_065681_4_0_1"/>
<dbReference type="InParanoid" id="P02794"/>
<dbReference type="OMA" id="FFLKASM"/>
<dbReference type="OrthoDB" id="186462at2759"/>
<dbReference type="PAN-GO" id="P02794">
    <property type="GO annotations" value="5 GO annotations based on evolutionary models"/>
</dbReference>
<dbReference type="PhylomeDB" id="P02794"/>
<dbReference type="TreeFam" id="TF313885"/>
<dbReference type="BRENDA" id="1.16.3.1">
    <property type="organism ID" value="2681"/>
</dbReference>
<dbReference type="PathwayCommons" id="P02794"/>
<dbReference type="Reactome" id="R-HSA-3000480">
    <property type="pathway name" value="Scavenging by Class A Receptors"/>
</dbReference>
<dbReference type="Reactome" id="R-HSA-432722">
    <property type="pathway name" value="Golgi Associated Vesicle Biogenesis"/>
</dbReference>
<dbReference type="Reactome" id="R-HSA-6798695">
    <property type="pathway name" value="Neutrophil degranulation"/>
</dbReference>
<dbReference type="Reactome" id="R-HSA-917937">
    <property type="pathway name" value="Iron uptake and transport"/>
</dbReference>
<dbReference type="SignaLink" id="P02794"/>
<dbReference type="SIGNOR" id="P02794"/>
<dbReference type="BioGRID-ORCS" id="2495">
    <property type="hits" value="81 hits in 1125 CRISPR screens"/>
</dbReference>
<dbReference type="CD-CODE" id="ECAD3DEA">
    <property type="entry name" value="Ferritin -NCOA4 condensate"/>
</dbReference>
<dbReference type="CD-CODE" id="FB4E32DD">
    <property type="entry name" value="Presynaptic clusters and postsynaptic densities"/>
</dbReference>
<dbReference type="ChiTaRS" id="FTH1">
    <property type="organism name" value="human"/>
</dbReference>
<dbReference type="EvolutionaryTrace" id="P02794"/>
<dbReference type="GeneWiki" id="FTH1"/>
<dbReference type="GenomeRNAi" id="2495"/>
<dbReference type="Pharos" id="P02794">
    <property type="development level" value="Tbio"/>
</dbReference>
<dbReference type="PRO" id="PR:P02794"/>
<dbReference type="Proteomes" id="UP000005640">
    <property type="component" value="Chromosome 11"/>
</dbReference>
<dbReference type="RNAct" id="P02794">
    <property type="molecule type" value="protein"/>
</dbReference>
<dbReference type="Bgee" id="ENSG00000167996">
    <property type="expression patterns" value="Expressed in stromal cell of endometrium and 198 other cell types or tissues"/>
</dbReference>
<dbReference type="ExpressionAtlas" id="P02794">
    <property type="expression patterns" value="baseline and differential"/>
</dbReference>
<dbReference type="GO" id="GO:0044754">
    <property type="term" value="C:autolysosome"/>
    <property type="evidence" value="ECO:0000314"/>
    <property type="project" value="MGI"/>
</dbReference>
<dbReference type="GO" id="GO:0005776">
    <property type="term" value="C:autophagosome"/>
    <property type="evidence" value="ECO:0007669"/>
    <property type="project" value="UniProtKB-SubCell"/>
</dbReference>
<dbReference type="GO" id="GO:0005737">
    <property type="term" value="C:cytoplasm"/>
    <property type="evidence" value="ECO:0000318"/>
    <property type="project" value="GO_Central"/>
</dbReference>
<dbReference type="GO" id="GO:0005829">
    <property type="term" value="C:cytosol"/>
    <property type="evidence" value="ECO:0000304"/>
    <property type="project" value="Reactome"/>
</dbReference>
<dbReference type="GO" id="GO:0070062">
    <property type="term" value="C:extracellular exosome"/>
    <property type="evidence" value="ECO:0007005"/>
    <property type="project" value="UniProtKB"/>
</dbReference>
<dbReference type="GO" id="GO:0005576">
    <property type="term" value="C:extracellular region"/>
    <property type="evidence" value="ECO:0000304"/>
    <property type="project" value="Reactome"/>
</dbReference>
<dbReference type="GO" id="GO:0070288">
    <property type="term" value="C:ferritin complex"/>
    <property type="evidence" value="ECO:0000304"/>
    <property type="project" value="ProtInc"/>
</dbReference>
<dbReference type="GO" id="GO:1904813">
    <property type="term" value="C:ficolin-1-rich granule lumen"/>
    <property type="evidence" value="ECO:0000304"/>
    <property type="project" value="Reactome"/>
</dbReference>
<dbReference type="GO" id="GO:0005634">
    <property type="term" value="C:nucleus"/>
    <property type="evidence" value="ECO:0007005"/>
    <property type="project" value="UniProtKB"/>
</dbReference>
<dbReference type="GO" id="GO:1904724">
    <property type="term" value="C:tertiary granule lumen"/>
    <property type="evidence" value="ECO:0000304"/>
    <property type="project" value="Reactome"/>
</dbReference>
<dbReference type="GO" id="GO:0008199">
    <property type="term" value="F:ferric iron binding"/>
    <property type="evidence" value="ECO:0000318"/>
    <property type="project" value="GO_Central"/>
</dbReference>
<dbReference type="GO" id="GO:0008198">
    <property type="term" value="F:ferrous iron binding"/>
    <property type="evidence" value="ECO:0000315"/>
    <property type="project" value="UniProtKB"/>
</dbReference>
<dbReference type="GO" id="GO:0004322">
    <property type="term" value="F:ferroxidase activity"/>
    <property type="evidence" value="ECO:0000315"/>
    <property type="project" value="UniProtKB"/>
</dbReference>
<dbReference type="GO" id="GO:0042802">
    <property type="term" value="F:identical protein binding"/>
    <property type="evidence" value="ECO:0000353"/>
    <property type="project" value="IntAct"/>
</dbReference>
<dbReference type="GO" id="GO:0005506">
    <property type="term" value="F:iron ion binding"/>
    <property type="evidence" value="ECO:0000304"/>
    <property type="project" value="ProtInc"/>
</dbReference>
<dbReference type="GO" id="GO:0140315">
    <property type="term" value="F:iron ion sequestering activity"/>
    <property type="evidence" value="ECO:0000314"/>
    <property type="project" value="GO_Central"/>
</dbReference>
<dbReference type="GO" id="GO:0006955">
    <property type="term" value="P:immune response"/>
    <property type="evidence" value="ECO:0000250"/>
    <property type="project" value="UniProtKB"/>
</dbReference>
<dbReference type="GO" id="GO:0006879">
    <property type="term" value="P:intracellular iron ion homeostasis"/>
    <property type="evidence" value="ECO:0000304"/>
    <property type="project" value="ProtInc"/>
</dbReference>
<dbReference type="GO" id="GO:0006826">
    <property type="term" value="P:iron ion transport"/>
    <property type="evidence" value="ECO:0000318"/>
    <property type="project" value="GO_Central"/>
</dbReference>
<dbReference type="GO" id="GO:0008285">
    <property type="term" value="P:negative regulation of cell population proliferation"/>
    <property type="evidence" value="ECO:0000250"/>
    <property type="project" value="UniProtKB"/>
</dbReference>
<dbReference type="GO" id="GO:0110076">
    <property type="term" value="P:negative regulation of ferroptosis"/>
    <property type="evidence" value="ECO:0000315"/>
    <property type="project" value="UniProtKB"/>
</dbReference>
<dbReference type="GO" id="GO:0048147">
    <property type="term" value="P:negative regulation of fibroblast proliferation"/>
    <property type="evidence" value="ECO:0000314"/>
    <property type="project" value="UniProtKB"/>
</dbReference>
<dbReference type="CDD" id="cd01056">
    <property type="entry name" value="Euk_Ferritin"/>
    <property type="match status" value="1"/>
</dbReference>
<dbReference type="FunFam" id="1.20.1260.10:FF:000024">
    <property type="entry name" value="Ferritin heavy chain"/>
    <property type="match status" value="1"/>
</dbReference>
<dbReference type="Gene3D" id="1.20.1260.10">
    <property type="match status" value="1"/>
</dbReference>
<dbReference type="InterPro" id="IPR001519">
    <property type="entry name" value="Ferritin"/>
</dbReference>
<dbReference type="InterPro" id="IPR012347">
    <property type="entry name" value="Ferritin-like"/>
</dbReference>
<dbReference type="InterPro" id="IPR009040">
    <property type="entry name" value="Ferritin-like_diiron"/>
</dbReference>
<dbReference type="InterPro" id="IPR009078">
    <property type="entry name" value="Ferritin-like_SF"/>
</dbReference>
<dbReference type="InterPro" id="IPR014034">
    <property type="entry name" value="Ferritin_CS"/>
</dbReference>
<dbReference type="InterPro" id="IPR008331">
    <property type="entry name" value="Ferritin_DPS_dom"/>
</dbReference>
<dbReference type="PANTHER" id="PTHR11431">
    <property type="entry name" value="FERRITIN"/>
    <property type="match status" value="1"/>
</dbReference>
<dbReference type="PANTHER" id="PTHR11431:SF37">
    <property type="entry name" value="FERRITIN HEAVY CHAIN"/>
    <property type="match status" value="1"/>
</dbReference>
<dbReference type="Pfam" id="PF00210">
    <property type="entry name" value="Ferritin"/>
    <property type="match status" value="1"/>
</dbReference>
<dbReference type="SUPFAM" id="SSF47240">
    <property type="entry name" value="Ferritin-like"/>
    <property type="match status" value="1"/>
</dbReference>
<dbReference type="PROSITE" id="PS00540">
    <property type="entry name" value="FERRITIN_1"/>
    <property type="match status" value="1"/>
</dbReference>
<dbReference type="PROSITE" id="PS00204">
    <property type="entry name" value="FERRITIN_2"/>
    <property type="match status" value="1"/>
</dbReference>
<dbReference type="PROSITE" id="PS50905">
    <property type="entry name" value="FERRITIN_LIKE"/>
    <property type="match status" value="1"/>
</dbReference>
<gene>
    <name type="primary">FTH1</name>
    <name type="synonym">FTH</name>
    <name type="synonym">FTHL6</name>
    <name type="ORF">OK/SW-cl.84</name>
    <name type="ORF">PIG15</name>
</gene>
<name>FRIH_HUMAN</name>
<comment type="function">
    <text evidence="1 5 6 8">Stores iron in a soluble, non-toxic, readily available form. Important for iron homeostasis. Has ferroxidase activity (PubMed:9003196). Iron is taken up in the ferrous form and deposited as ferric hydroxides after oxidation (PubMed:9003196). Also plays a role in delivery of iron to cells (By similarity). Mediates iron uptake in capsule cells of the developing kidney (By similarity). Delivery to lysosomes is mediated by the cargo receptor NCOA4 for autophagic degradation and release of iron (PubMed:24695223, PubMed:26436293).</text>
</comment>
<comment type="catalytic activity">
    <reaction evidence="8">
        <text>4 Fe(2+) + O2 + 4 H(+) = 4 Fe(3+) + 2 H2O</text>
        <dbReference type="Rhea" id="RHEA:11148"/>
        <dbReference type="ChEBI" id="CHEBI:15377"/>
        <dbReference type="ChEBI" id="CHEBI:15378"/>
        <dbReference type="ChEBI" id="CHEBI:15379"/>
        <dbReference type="ChEBI" id="CHEBI:29033"/>
        <dbReference type="ChEBI" id="CHEBI:29034"/>
        <dbReference type="EC" id="1.16.3.1"/>
    </reaction>
</comment>
<comment type="subunit">
    <text evidence="5 9">Oligomer of 24 subunits (PubMed:9159481). There are two types of subunits: L (light) chain and H (heavy) chain (PubMed:9159481). The major chain can be light or heavy, depending on the species and tissue type. In the human liver, the heavy chain is predominant (PubMed:9159481). The functional molecule forms a roughly spherical shell with a diameter of 12 nm and contains a central cavity into which the insoluble mineral iron core is deposited (PubMed:9159481). Interacts with NCOA4; NCOA4 promotes targeting of the iron-binding ferritin complex to autolysosomes following starvation or iron depletion (PubMed:24695223).</text>
</comment>
<comment type="interaction">
    <interactant intactId="EBI-713259">
        <id>P02794</id>
    </interactant>
    <interactant intactId="EBI-2949658">
        <id>O95429</id>
        <label>BAG4</label>
    </interactant>
    <organismsDiffer>false</organismsDiffer>
    <experiments>4</experiments>
</comment>
<comment type="interaction">
    <interactant intactId="EBI-713259">
        <id>P02794</id>
    </interactant>
    <interactant intactId="EBI-77321">
        <id>Q9UER7</id>
        <label>DAXX</label>
    </interactant>
    <organismsDiffer>false</organismsDiffer>
    <experiments>5</experiments>
</comment>
<comment type="interaction">
    <interactant intactId="EBI-713259">
        <id>P02794</id>
    </interactant>
    <interactant intactId="EBI-713259">
        <id>P02794</id>
        <label>FTH1</label>
    </interactant>
    <organismsDiffer>false</organismsDiffer>
    <experiments>3</experiments>
</comment>
<comment type="interaction">
    <interactant intactId="EBI-713259">
        <id>P02794</id>
    </interactant>
    <interactant intactId="EBI-713279">
        <id>P02792</id>
        <label>FTL</label>
    </interactant>
    <organismsDiffer>false</organismsDiffer>
    <experiments>19</experiments>
</comment>
<comment type="interaction">
    <interactant intactId="EBI-713259">
        <id>P02794</id>
    </interactant>
    <interactant intactId="EBI-740459">
        <id>P51116</id>
        <label>FXR2</label>
    </interactant>
    <organismsDiffer>false</organismsDiffer>
    <experiments>3</experiments>
</comment>
<comment type="interaction">
    <interactant intactId="EBI-713259">
        <id>P02794</id>
    </interactant>
    <interactant intactId="EBI-352682">
        <id>P04792</id>
        <label>HSPB1</label>
    </interactant>
    <organismsDiffer>false</organismsDiffer>
    <experiments>2</experiments>
</comment>
<comment type="interaction">
    <interactant intactId="EBI-713259">
        <id>P02794</id>
    </interactant>
    <interactant intactId="EBI-751711">
        <id>P61244</id>
        <label>MAX</label>
    </interactant>
    <organismsDiffer>false</organismsDiffer>
    <experiments>2</experiments>
</comment>
<comment type="interaction">
    <interactant intactId="EBI-713259">
        <id>P02794</id>
    </interactant>
    <interactant intactId="EBI-355727">
        <id>P02786</id>
        <label>TFRC</label>
    </interactant>
    <organismsDiffer>false</organismsDiffer>
    <experiments>2</experiments>
</comment>
<comment type="interaction">
    <interactant intactId="EBI-713259">
        <id>P02794</id>
    </interactant>
    <interactant intactId="EBI-1047085">
        <id>Q92574</id>
        <label>TSC1</label>
    </interactant>
    <organismsDiffer>false</organismsDiffer>
    <experiments>3</experiments>
</comment>
<comment type="interaction">
    <interactant intactId="EBI-713259">
        <id>P02794</id>
    </interactant>
    <interactant intactId="EBI-9675545">
        <id>Q2Q067</id>
        <label>HBZ</label>
    </interactant>
    <organismsDiffer>true</organismsDiffer>
    <experiments>3</experiments>
</comment>
<comment type="subcellular location">
    <subcellularLocation>
        <location evidence="6">Cytoplasm</location>
    </subcellularLocation>
    <subcellularLocation>
        <location evidence="6">Lysosome</location>
    </subcellularLocation>
    <subcellularLocation>
        <location evidence="5">Cytoplasmic vesicle</location>
        <location evidence="5">Autophagosome</location>
    </subcellularLocation>
</comment>
<comment type="tissue specificity">
    <text evidence="3">Expressed in the liver.</text>
</comment>
<comment type="disease" evidence="3">
    <disease id="DI-03942">
        <name>Hemochromatosis 5</name>
        <acronym>HFE5</acronym>
        <description>A disorder of iron metabolism characterized by iron overload. Excess iron is deposited in a variety of organs leading to their failure, and resulting in serious illnesses including cirrhosis, hepatomas, diabetes, cardiomyopathy, arthritis, and hypogonadotropic hypogonadism. Severe effects of the disease usually do not appear until after decades of progressive iron loading.</description>
        <dbReference type="MIM" id="615517"/>
    </disease>
    <text>The disease is caused by variants affecting the gene represented in this entry. In a Japanese family affected by HFE5, a single point mutation has been detected in the iron-responsive element (IRE) in the 5'-UTR of FTH1 mRNA. This mutation leads to an increased binding affinity for iron regulatory protein and thereby to the efficient suppression of mRNA translation.</text>
</comment>
<comment type="disease" evidence="7">
    <disease id="DI-06821">
        <name>Neurodegeneration with brain iron accumulation 9</name>
        <acronym>NBIA9</acronym>
        <description>An autosomal dominant neurodegenerative disorder associated with iron accumulation, primarily in the basal ganglia. It is characterized by global developmental delay apparent from infancy, and progressive decline of motor and cognitive skills. Clinical features include delayed walking or inability to walk, spasticity with hyperreflexia, ataxia, dystonia, and poor or absent language.</description>
        <dbReference type="MIM" id="620669"/>
    </disease>
    <text>The disease is caused by variants affecting the gene represented in this entry.</text>
</comment>
<comment type="similarity">
    <text evidence="10">Belongs to the ferritin family.</text>
</comment>
<comment type="sequence caution" evidence="10">
    <conflict type="erroneous initiation">
        <sequence resource="EMBL-CDS" id="AAI05803"/>
    </conflict>
    <text>Extended N-terminus.</text>
</comment>
<comment type="online information" name="Wikipedia">
    <link uri="https://en.wikipedia.org/wiki/Ferritin"/>
    <text>Ferritin entry</text>
</comment>
<keyword id="KW-0002">3D-structure</keyword>
<keyword id="KW-0007">Acetylation</keyword>
<keyword id="KW-0963">Cytoplasm</keyword>
<keyword id="KW-0968">Cytoplasmic vesicle</keyword>
<keyword id="KW-0408">Iron</keyword>
<keyword id="KW-0409">Iron storage</keyword>
<keyword id="KW-0458">Lysosome</keyword>
<keyword id="KW-0479">Metal-binding</keyword>
<keyword id="KW-0523">Neurodegeneration</keyword>
<keyword id="KW-0560">Oxidoreductase</keyword>
<keyword id="KW-0597">Phosphoprotein</keyword>
<keyword id="KW-1267">Proteomics identification</keyword>
<keyword id="KW-1185">Reference proteome</keyword>
<feature type="chain" id="PRO_0000201048" description="Ferritin heavy chain">
    <location>
        <begin position="1"/>
        <end position="183"/>
    </location>
</feature>
<feature type="initiator methionine" description="Removed; alternate" evidence="17">
    <location>
        <position position="1"/>
    </location>
</feature>
<feature type="chain" id="PRO_0000424472" description="Ferritin heavy chain, N-terminally processed">
    <location>
        <begin position="2"/>
        <end position="183"/>
    </location>
</feature>
<feature type="domain" description="Ferritin-like diiron" evidence="2">
    <location>
        <begin position="11"/>
        <end position="160"/>
    </location>
</feature>
<feature type="binding site" evidence="4 11">
    <location>
        <position position="28"/>
    </location>
    <ligand>
        <name>Fe cation</name>
        <dbReference type="ChEBI" id="CHEBI:24875"/>
        <label>1</label>
    </ligand>
</feature>
<feature type="binding site" evidence="4 11">
    <location>
        <position position="63"/>
    </location>
    <ligand>
        <name>Fe cation</name>
        <dbReference type="ChEBI" id="CHEBI:24875"/>
        <label>1</label>
    </ligand>
</feature>
<feature type="binding site" evidence="2">
    <location>
        <position position="63"/>
    </location>
    <ligand>
        <name>Fe cation</name>
        <dbReference type="ChEBI" id="CHEBI:24875"/>
        <label>2</label>
    </ligand>
</feature>
<feature type="binding site" evidence="4 11">
    <location>
        <position position="66"/>
    </location>
    <ligand>
        <name>Fe cation</name>
        <dbReference type="ChEBI" id="CHEBI:24875"/>
        <label>1</label>
    </ligand>
</feature>
<feature type="binding site" evidence="2">
    <location>
        <position position="108"/>
    </location>
    <ligand>
        <name>Fe cation</name>
        <dbReference type="ChEBI" id="CHEBI:24875"/>
        <label>2</label>
    </ligand>
</feature>
<feature type="binding site" evidence="2">
    <location>
        <position position="142"/>
    </location>
    <ligand>
        <name>Fe cation</name>
        <dbReference type="ChEBI" id="CHEBI:24875"/>
        <label>2</label>
    </ligand>
</feature>
<feature type="site" description="Essential for association with cargo receptor NCOA4" evidence="6">
    <location>
        <position position="23"/>
    </location>
</feature>
<feature type="modified residue" description="N-acetylmethionine" evidence="17">
    <location>
        <position position="1"/>
    </location>
</feature>
<feature type="modified residue" description="N-acetylthreonine; in Ferritin heavy chain, N-terminally processed" evidence="17">
    <location>
        <position position="2"/>
    </location>
</feature>
<feature type="modified residue" description="Phosphoserine" evidence="13 14 15 16 18">
    <location>
        <position position="179"/>
    </location>
</feature>
<feature type="modified residue" description="Phosphoserine" evidence="14">
    <location>
        <position position="183"/>
    </location>
</feature>
<feature type="mutagenesis site" description="Abrogates interaction with NCOA4. Fails to localize to punctate lysosomal structures." evidence="6">
    <original>R</original>
    <variation>A</variation>
    <location>
        <position position="23"/>
    </location>
</feature>
<feature type="mutagenesis site" description="Reduces iron binding and oxidation rate; when associated with Q-87." evidence="8">
    <original>E</original>
    <variation>A</variation>
    <location>
        <position position="28"/>
    </location>
</feature>
<feature type="mutagenesis site" description="Reduces iron binding and oxidation rate; when associated with A-28. No effect on iron binding but the oxidation rate is severely reduced; when associated with A-108." evidence="8">
    <original>K</original>
    <variation>Q</variation>
    <location>
        <position position="87"/>
    </location>
</feature>
<feature type="mutagenesis site" description="No effect on iron binding but the oxidation rate is severely reduced; when associated with Q-87." evidence="8">
    <original>E</original>
    <variation>A</variation>
    <location>
        <position position="108"/>
    </location>
</feature>
<feature type="sequence conflict" description="In Ref. 1; CAA25086." evidence="10" ref="1">
    <original>LGDSDNES</original>
    <variation>WETVIMKAKPRANFP</variation>
    <location>
        <begin position="176"/>
        <end position="183"/>
    </location>
</feature>
<feature type="helix" evidence="20">
    <location>
        <begin position="15"/>
        <end position="42"/>
    </location>
</feature>
<feature type="turn" evidence="20">
    <location>
        <begin position="45"/>
        <end position="47"/>
    </location>
</feature>
<feature type="helix" evidence="20">
    <location>
        <begin position="50"/>
        <end position="77"/>
    </location>
</feature>
<feature type="helix" evidence="20">
    <location>
        <begin position="97"/>
        <end position="124"/>
    </location>
</feature>
<feature type="helix" evidence="20">
    <location>
        <begin position="128"/>
        <end position="137"/>
    </location>
</feature>
<feature type="helix" evidence="20">
    <location>
        <begin position="139"/>
        <end position="159"/>
    </location>
</feature>
<feature type="turn" evidence="20">
    <location>
        <begin position="160"/>
        <end position="163"/>
    </location>
</feature>
<feature type="helix" evidence="20">
    <location>
        <begin position="165"/>
        <end position="174"/>
    </location>
</feature>
<feature type="strand" evidence="19">
    <location>
        <begin position="176"/>
        <end position="178"/>
    </location>
</feature>
<proteinExistence type="evidence at protein level"/>
<protein>
    <recommendedName>
        <fullName>Ferritin heavy chain</fullName>
        <shortName>Ferritin H subunit</shortName>
        <ecNumber evidence="8">1.16.3.1</ecNumber>
    </recommendedName>
    <alternativeName>
        <fullName>Cell proliferation-inducing gene 15 protein</fullName>
    </alternativeName>
    <component>
        <recommendedName>
            <fullName>Ferritin heavy chain, N-terminally processed</fullName>
        </recommendedName>
    </component>
</protein>
<reference key="1">
    <citation type="journal article" date="1984" name="EMBO J.">
        <title>Cloning and sequencing of a full length cDNA coding for a human apoferritin H chain: evidence for a multigene family.</title>
        <authorList>
            <person name="Costanzo F."/>
            <person name="Santoro C."/>
            <person name="Colantuoni V."/>
            <person name="Bensi G."/>
            <person name="Raugei G."/>
            <person name="Romano V."/>
            <person name="Cortese R."/>
        </authorList>
    </citation>
    <scope>NUCLEOTIDE SEQUENCE [MRNA]</scope>
    <source>
        <tissue>Hepatocyte</tissue>
    </source>
</reference>
<reference key="2">
    <citation type="journal article" date="1985" name="J. Biol. Chem.">
        <title>Structural and functional relationships of human ferritin H and L chains deduced from cDNA clones.</title>
        <authorList>
            <person name="Boyd D."/>
            <person name="Vecoli C."/>
            <person name="Belcher D.M."/>
            <person name="Jain S.K."/>
            <person name="Drysdale J.W."/>
        </authorList>
    </citation>
    <scope>NUCLEOTIDE SEQUENCE [MRNA]</scope>
</reference>
<reference key="3">
    <citation type="journal article" date="1986" name="Mol. Cell. Biol.">
        <title>Structure and expression of ferritin genes in a human promyelocytic cell line that differentiates in vitro.</title>
        <authorList>
            <person name="Chou C.-C."/>
            <person name="Gatti R.A."/>
            <person name="Fuller M.L."/>
            <person name="Concannon P."/>
            <person name="Wong A."/>
            <person name="Chada S."/>
            <person name="Davis R.C."/>
            <person name="Salser W.A."/>
        </authorList>
    </citation>
    <scope>NUCLEOTIDE SEQUENCE [GENOMIC DNA]</scope>
</reference>
<reference key="4">
    <citation type="journal article" date="1986" name="Nucleic Acids Res.">
        <title>Structure of gene and pseudogenes of human apoferritin H.</title>
        <authorList>
            <person name="Costanzo F."/>
            <person name="Colombo M."/>
            <person name="Staempfli S."/>
            <person name="Santoro C."/>
            <person name="Marone M."/>
            <person name="Frank R."/>
            <person name="Delius H."/>
            <person name="Cortese R."/>
        </authorList>
    </citation>
    <scope>NUCLEOTIDE SEQUENCE [GENOMIC DNA]</scope>
</reference>
<reference key="5">
    <citation type="journal article" date="1986" name="Proc. Natl. Acad. Sci. U.S.A.">
        <title>Cloning, characterization, expression, and chromosomal localization of a human ferritin heavy-chain gene.</title>
        <authorList>
            <person name="Hentze M.W."/>
            <person name="Keim S."/>
            <person name="Papadopoulos P."/>
            <person name="O'Brien S."/>
            <person name="Modi W."/>
            <person name="Drysdale J.W."/>
            <person name="Leonard W.J."/>
            <person name="Harford J.B."/>
            <person name="Klausner R.D."/>
        </authorList>
    </citation>
    <scope>NUCLEOTIDE SEQUENCE [GENOMIC DNA]</scope>
</reference>
<reference key="6">
    <citation type="journal article" date="1993" name="Gene">
        <title>Sequence of a cDNA encoding the ferritin H-chain from an 11-week-old human fetal brain.</title>
        <authorList>
            <person name="Dhar M."/>
            <person name="Chauthaiwale V.M."/>
            <person name="Joshi J.G."/>
        </authorList>
    </citation>
    <scope>NUCLEOTIDE SEQUENCE [MRNA]</scope>
    <source>
        <tissue>Brain</tissue>
    </source>
</reference>
<reference key="7">
    <citation type="submission" date="1994-07" db="EMBL/GenBank/DDBJ databases">
        <title>Cloning of a novel full length cDNA for ferritin heavy chain from normal adult human and Alzheimer's brain.</title>
        <authorList>
            <person name="Chauthaiwale V.M."/>
            <person name="Dhar M."/>
            <person name="McLachlan D.R."/>
            <person name="Joshi J.G."/>
        </authorList>
    </citation>
    <scope>NUCLEOTIDE SEQUENCE [MRNA]</scope>
    <source>
        <tissue>Brain</tissue>
    </source>
</reference>
<reference key="8">
    <citation type="submission" date="1998-08" db="EMBL/GenBank/DDBJ databases">
        <title>Detection of ferritin heavy chain by SEREX: a multifunctional molecule in malignant tumour cells.</title>
        <authorList>
            <person name="Franco A.V."/>
            <person name="Gray C.P."/>
            <person name="Myers K."/>
            <person name="Hersey P."/>
        </authorList>
    </citation>
    <scope>NUCLEOTIDE SEQUENCE [MRNA]</scope>
</reference>
<reference key="9">
    <citation type="submission" date="2003-03" db="EMBL/GenBank/DDBJ databases">
        <title>Identification of a human cell proliferation gene 15.</title>
        <authorList>
            <person name="Kim J.W."/>
        </authorList>
    </citation>
    <scope>NUCLEOTIDE SEQUENCE [LARGE SCALE MRNA]</scope>
</reference>
<reference key="10">
    <citation type="submission" date="2001-05" db="EMBL/GenBank/DDBJ databases">
        <title>Identification of immuno-peptidmics that are recognized by tumor-reactive CTL generated from TIL of colon cancer patients.</title>
        <authorList>
            <person name="Shichijo S."/>
            <person name="Itoh K."/>
        </authorList>
    </citation>
    <scope>NUCLEOTIDE SEQUENCE [LARGE SCALE MRNA]</scope>
    <source>
        <tissue>Colon adenocarcinoma</tissue>
    </source>
</reference>
<reference key="11">
    <citation type="journal article" date="2004" name="Nat. Genet.">
        <title>Complete sequencing and characterization of 21,243 full-length human cDNAs.</title>
        <authorList>
            <person name="Ota T."/>
            <person name="Suzuki Y."/>
            <person name="Nishikawa T."/>
            <person name="Otsuki T."/>
            <person name="Sugiyama T."/>
            <person name="Irie R."/>
            <person name="Wakamatsu A."/>
            <person name="Hayashi K."/>
            <person name="Sato H."/>
            <person name="Nagai K."/>
            <person name="Kimura K."/>
            <person name="Makita H."/>
            <person name="Sekine M."/>
            <person name="Obayashi M."/>
            <person name="Nishi T."/>
            <person name="Shibahara T."/>
            <person name="Tanaka T."/>
            <person name="Ishii S."/>
            <person name="Yamamoto J."/>
            <person name="Saito K."/>
            <person name="Kawai Y."/>
            <person name="Isono Y."/>
            <person name="Nakamura Y."/>
            <person name="Nagahari K."/>
            <person name="Murakami K."/>
            <person name="Yasuda T."/>
            <person name="Iwayanagi T."/>
            <person name="Wagatsuma M."/>
            <person name="Shiratori A."/>
            <person name="Sudo H."/>
            <person name="Hosoiri T."/>
            <person name="Kaku Y."/>
            <person name="Kodaira H."/>
            <person name="Kondo H."/>
            <person name="Sugawara M."/>
            <person name="Takahashi M."/>
            <person name="Kanda K."/>
            <person name="Yokoi T."/>
            <person name="Furuya T."/>
            <person name="Kikkawa E."/>
            <person name="Omura Y."/>
            <person name="Abe K."/>
            <person name="Kamihara K."/>
            <person name="Katsuta N."/>
            <person name="Sato K."/>
            <person name="Tanikawa M."/>
            <person name="Yamazaki M."/>
            <person name="Ninomiya K."/>
            <person name="Ishibashi T."/>
            <person name="Yamashita H."/>
            <person name="Murakawa K."/>
            <person name="Fujimori K."/>
            <person name="Tanai H."/>
            <person name="Kimata M."/>
            <person name="Watanabe M."/>
            <person name="Hiraoka S."/>
            <person name="Chiba Y."/>
            <person name="Ishida S."/>
            <person name="Ono Y."/>
            <person name="Takiguchi S."/>
            <person name="Watanabe S."/>
            <person name="Yosida M."/>
            <person name="Hotuta T."/>
            <person name="Kusano J."/>
            <person name="Kanehori K."/>
            <person name="Takahashi-Fujii A."/>
            <person name="Hara H."/>
            <person name="Tanase T.-O."/>
            <person name="Nomura Y."/>
            <person name="Togiya S."/>
            <person name="Komai F."/>
            <person name="Hara R."/>
            <person name="Takeuchi K."/>
            <person name="Arita M."/>
            <person name="Imose N."/>
            <person name="Musashino K."/>
            <person name="Yuuki H."/>
            <person name="Oshima A."/>
            <person name="Sasaki N."/>
            <person name="Aotsuka S."/>
            <person name="Yoshikawa Y."/>
            <person name="Matsunawa H."/>
            <person name="Ichihara T."/>
            <person name="Shiohata N."/>
            <person name="Sano S."/>
            <person name="Moriya S."/>
            <person name="Momiyama H."/>
            <person name="Satoh N."/>
            <person name="Takami S."/>
            <person name="Terashima Y."/>
            <person name="Suzuki O."/>
            <person name="Nakagawa S."/>
            <person name="Senoh A."/>
            <person name="Mizoguchi H."/>
            <person name="Goto Y."/>
            <person name="Shimizu F."/>
            <person name="Wakebe H."/>
            <person name="Hishigaki H."/>
            <person name="Watanabe T."/>
            <person name="Sugiyama A."/>
            <person name="Takemoto M."/>
            <person name="Kawakami B."/>
            <person name="Yamazaki M."/>
            <person name="Watanabe K."/>
            <person name="Kumagai A."/>
            <person name="Itakura S."/>
            <person name="Fukuzumi Y."/>
            <person name="Fujimori Y."/>
            <person name="Komiyama M."/>
            <person name="Tashiro H."/>
            <person name="Tanigami A."/>
            <person name="Fujiwara T."/>
            <person name="Ono T."/>
            <person name="Yamada K."/>
            <person name="Fujii Y."/>
            <person name="Ozaki K."/>
            <person name="Hirao M."/>
            <person name="Ohmori Y."/>
            <person name="Kawabata A."/>
            <person name="Hikiji T."/>
            <person name="Kobatake N."/>
            <person name="Inagaki H."/>
            <person name="Ikema Y."/>
            <person name="Okamoto S."/>
            <person name="Okitani R."/>
            <person name="Kawakami T."/>
            <person name="Noguchi S."/>
            <person name="Itoh T."/>
            <person name="Shigeta K."/>
            <person name="Senba T."/>
            <person name="Matsumura K."/>
            <person name="Nakajima Y."/>
            <person name="Mizuno T."/>
            <person name="Morinaga M."/>
            <person name="Sasaki M."/>
            <person name="Togashi T."/>
            <person name="Oyama M."/>
            <person name="Hata H."/>
            <person name="Watanabe M."/>
            <person name="Komatsu T."/>
            <person name="Mizushima-Sugano J."/>
            <person name="Satoh T."/>
            <person name="Shirai Y."/>
            <person name="Takahashi Y."/>
            <person name="Nakagawa K."/>
            <person name="Okumura K."/>
            <person name="Nagase T."/>
            <person name="Nomura N."/>
            <person name="Kikuchi H."/>
            <person name="Masuho Y."/>
            <person name="Yamashita R."/>
            <person name="Nakai K."/>
            <person name="Yada T."/>
            <person name="Nakamura Y."/>
            <person name="Ohara O."/>
            <person name="Isogai T."/>
            <person name="Sugano S."/>
        </authorList>
    </citation>
    <scope>NUCLEOTIDE SEQUENCE [LARGE SCALE MRNA]</scope>
    <source>
        <tissue>Cerebellum</tissue>
    </source>
</reference>
<reference key="12">
    <citation type="submission" date="2006-04" db="EMBL/GenBank/DDBJ databases">
        <authorList>
            <consortium name="NHLBI resequencing and genotyping service (RS&amp;G)"/>
        </authorList>
    </citation>
    <scope>NUCLEOTIDE SEQUENCE [GENOMIC DNA]</scope>
</reference>
<reference key="13">
    <citation type="submission" date="2005-07" db="EMBL/GenBank/DDBJ databases">
        <authorList>
            <person name="Mural R.J."/>
            <person name="Istrail S."/>
            <person name="Sutton G.G."/>
            <person name="Florea L."/>
            <person name="Halpern A.L."/>
            <person name="Mobarry C.M."/>
            <person name="Lippert R."/>
            <person name="Walenz B."/>
            <person name="Shatkay H."/>
            <person name="Dew I."/>
            <person name="Miller J.R."/>
            <person name="Flanigan M.J."/>
            <person name="Edwards N.J."/>
            <person name="Bolanos R."/>
            <person name="Fasulo D."/>
            <person name="Halldorsson B.V."/>
            <person name="Hannenhalli S."/>
            <person name="Turner R."/>
            <person name="Yooseph S."/>
            <person name="Lu F."/>
            <person name="Nusskern D.R."/>
            <person name="Shue B.C."/>
            <person name="Zheng X.H."/>
            <person name="Zhong F."/>
            <person name="Delcher A.L."/>
            <person name="Huson D.H."/>
            <person name="Kravitz S.A."/>
            <person name="Mouchard L."/>
            <person name="Reinert K."/>
            <person name="Remington K.A."/>
            <person name="Clark A.G."/>
            <person name="Waterman M.S."/>
            <person name="Eichler E.E."/>
            <person name="Adams M.D."/>
            <person name="Hunkapiller M.W."/>
            <person name="Myers E.W."/>
            <person name="Venter J.C."/>
        </authorList>
    </citation>
    <scope>NUCLEOTIDE SEQUENCE [LARGE SCALE GENOMIC DNA]</scope>
</reference>
<reference key="14">
    <citation type="journal article" date="2004" name="Genome Res.">
        <title>The status, quality, and expansion of the NIH full-length cDNA project: the Mammalian Gene Collection (MGC).</title>
        <authorList>
            <consortium name="The MGC Project Team"/>
        </authorList>
    </citation>
    <scope>NUCLEOTIDE SEQUENCE [LARGE SCALE MRNA]</scope>
    <source>
        <tissue>Brain</tissue>
        <tissue>Cervix</tissue>
        <tissue>Colon</tissue>
        <tissue>Lung</tissue>
        <tissue>Ovary</tissue>
        <tissue>Prostate</tissue>
        <tissue>Salivary gland</tissue>
    </source>
</reference>
<reference key="15">
    <citation type="journal article" date="1984" name="Proc. Natl. Acad. Sci. U.S.A.">
        <title>Isolation and characterization of a cDNA clone for human ferritin heavy chain.</title>
        <authorList>
            <person name="Boyd D."/>
            <person name="Jain S.K."/>
            <person name="Crampton J."/>
            <person name="Barrett K.J."/>
            <person name="Drysdale J."/>
        </authorList>
    </citation>
    <scope>NUCLEOTIDE SEQUENCE [MRNA] OF 128-183</scope>
</reference>
<reference key="16">
    <citation type="journal article" date="1997" name="Biochemistry">
        <title>Dinuclear center of ferritin: studies of iron binding and oxidation show differences in the two iron sites.</title>
        <authorList>
            <person name="Treffry A."/>
            <person name="Zhao Z."/>
            <person name="Quail M.A."/>
            <person name="Guest J.R."/>
            <person name="Harrison P.M."/>
        </authorList>
    </citation>
    <scope>FUNCTION</scope>
    <scope>CATALYTIC ACTIVITY</scope>
    <scope>MUTAGENESIS OF GLU-28; LYS-87 AND GLU-108</scope>
</reference>
<reference key="17">
    <citation type="journal article" date="2001" name="Am. J. Hum. Genet.">
        <title>A mutation, in the iron-responsive element of H ferritin mRNA, causing autosomal dominant iron overload.</title>
        <authorList>
            <person name="Kato J."/>
            <person name="Fujikawa K."/>
            <person name="Kanda M."/>
            <person name="Fukuda N."/>
            <person name="Sasaki K."/>
            <person name="Takayama T."/>
            <person name="Kobune M."/>
            <person name="Takada K."/>
            <person name="Takimoto R."/>
            <person name="Hamada H."/>
            <person name="Ikeda T."/>
            <person name="Niitsu Y."/>
        </authorList>
    </citation>
    <scope>TISSUE SPECIFICITY</scope>
    <scope>INVOLVEMENT IN HFE5</scope>
</reference>
<reference key="18">
    <citation type="journal article" date="2006" name="Cell">
        <title>Global, in vivo, and site-specific phosphorylation dynamics in signaling networks.</title>
        <authorList>
            <person name="Olsen J.V."/>
            <person name="Blagoev B."/>
            <person name="Gnad F."/>
            <person name="Macek B."/>
            <person name="Kumar C."/>
            <person name="Mortensen P."/>
            <person name="Mann M."/>
        </authorList>
    </citation>
    <scope>PHOSPHORYLATION [LARGE SCALE ANALYSIS] AT SER-179</scope>
    <scope>IDENTIFICATION BY MASS SPECTROMETRY [LARGE SCALE ANALYSIS]</scope>
    <source>
        <tissue>Cervix carcinoma</tissue>
    </source>
</reference>
<reference key="19">
    <citation type="journal article" date="2008" name="Proc. Natl. Acad. Sci. U.S.A.">
        <title>A quantitative atlas of mitotic phosphorylation.</title>
        <authorList>
            <person name="Dephoure N."/>
            <person name="Zhou C."/>
            <person name="Villen J."/>
            <person name="Beausoleil S.A."/>
            <person name="Bakalarski C.E."/>
            <person name="Elledge S.J."/>
            <person name="Gygi S.P."/>
        </authorList>
    </citation>
    <scope>IDENTIFICATION BY MASS SPECTROMETRY [LARGE SCALE ANALYSIS]</scope>
    <source>
        <tissue>Cervix carcinoma</tissue>
    </source>
</reference>
<reference key="20">
    <citation type="journal article" date="2008" name="Proteomics">
        <title>Large-scale phosphoproteome analysis of human liver tissue by enrichment and fractionation of phosphopeptides with strong anion exchange chromatography.</title>
        <authorList>
            <person name="Han G."/>
            <person name="Ye M."/>
            <person name="Zhou H."/>
            <person name="Jiang X."/>
            <person name="Feng S."/>
            <person name="Jiang X."/>
            <person name="Tian R."/>
            <person name="Wan D."/>
            <person name="Zou H."/>
            <person name="Gu J."/>
        </authorList>
    </citation>
    <scope>PHOSPHORYLATION [LARGE SCALE ANALYSIS] AT SER-179 AND SER-183</scope>
    <scope>IDENTIFICATION BY MASS SPECTROMETRY [LARGE SCALE ANALYSIS]</scope>
    <source>
        <tissue>Liver</tissue>
    </source>
</reference>
<reference key="21">
    <citation type="journal article" date="2010" name="Sci. Signal.">
        <title>Quantitative phosphoproteomics reveals widespread full phosphorylation site occupancy during mitosis.</title>
        <authorList>
            <person name="Olsen J.V."/>
            <person name="Vermeulen M."/>
            <person name="Santamaria A."/>
            <person name="Kumar C."/>
            <person name="Miller M.L."/>
            <person name="Jensen L.J."/>
            <person name="Gnad F."/>
            <person name="Cox J."/>
            <person name="Jensen T.S."/>
            <person name="Nigg E.A."/>
            <person name="Brunak S."/>
            <person name="Mann M."/>
        </authorList>
    </citation>
    <scope>PHOSPHORYLATION [LARGE SCALE ANALYSIS] AT SER-179</scope>
    <scope>IDENTIFICATION BY MASS SPECTROMETRY [LARGE SCALE ANALYSIS]</scope>
    <source>
        <tissue>Cervix carcinoma</tissue>
    </source>
</reference>
<reference key="22">
    <citation type="journal article" date="2011" name="BMC Syst. Biol.">
        <title>Initial characterization of the human central proteome.</title>
        <authorList>
            <person name="Burkard T.R."/>
            <person name="Planyavsky M."/>
            <person name="Kaupe I."/>
            <person name="Breitwieser F.P."/>
            <person name="Buerckstuemmer T."/>
            <person name="Bennett K.L."/>
            <person name="Superti-Furga G."/>
            <person name="Colinge J."/>
        </authorList>
    </citation>
    <scope>IDENTIFICATION BY MASS SPECTROMETRY [LARGE SCALE ANALYSIS]</scope>
</reference>
<reference key="23">
    <citation type="journal article" date="2011" name="Sci. Signal.">
        <title>System-wide temporal characterization of the proteome and phosphoproteome of human embryonic stem cell differentiation.</title>
        <authorList>
            <person name="Rigbolt K.T."/>
            <person name="Prokhorova T.A."/>
            <person name="Akimov V."/>
            <person name="Henningsen J."/>
            <person name="Johansen P.T."/>
            <person name="Kratchmarova I."/>
            <person name="Kassem M."/>
            <person name="Mann M."/>
            <person name="Olsen J.V."/>
            <person name="Blagoev B."/>
        </authorList>
    </citation>
    <scope>PHOSPHORYLATION [LARGE SCALE ANALYSIS] AT SER-179</scope>
    <scope>IDENTIFICATION BY MASS SPECTROMETRY [LARGE SCALE ANALYSIS]</scope>
</reference>
<reference key="24">
    <citation type="journal article" date="2012" name="Proc. Natl. Acad. Sci. U.S.A.">
        <title>N-terminal acetylome analyses and functional insights of the N-terminal acetyltransferase NatB.</title>
        <authorList>
            <person name="Van Damme P."/>
            <person name="Lasa M."/>
            <person name="Polevoda B."/>
            <person name="Gazquez C."/>
            <person name="Elosegui-Artola A."/>
            <person name="Kim D.S."/>
            <person name="De Juan-Pardo E."/>
            <person name="Demeyer K."/>
            <person name="Hole K."/>
            <person name="Larrea E."/>
            <person name="Timmerman E."/>
            <person name="Prieto J."/>
            <person name="Arnesen T."/>
            <person name="Sherman F."/>
            <person name="Gevaert K."/>
            <person name="Aldabe R."/>
        </authorList>
    </citation>
    <scope>ACETYLATION [LARGE SCALE ANALYSIS] AT MET-1 AND THR-2</scope>
    <scope>CLEAVAGE OF INITIATOR METHIONINE [LARGE SCALE ANALYSIS]</scope>
    <scope>IDENTIFICATION BY MASS SPECTROMETRY [LARGE SCALE ANALYSIS]</scope>
</reference>
<reference key="25">
    <citation type="journal article" date="2014" name="J. Proteomics">
        <title>An enzyme assisted RP-RPLC approach for in-depth analysis of human liver phosphoproteome.</title>
        <authorList>
            <person name="Bian Y."/>
            <person name="Song C."/>
            <person name="Cheng K."/>
            <person name="Dong M."/>
            <person name="Wang F."/>
            <person name="Huang J."/>
            <person name="Sun D."/>
            <person name="Wang L."/>
            <person name="Ye M."/>
            <person name="Zou H."/>
        </authorList>
    </citation>
    <scope>PHOSPHORYLATION [LARGE SCALE ANALYSIS] AT SER-179</scope>
    <scope>IDENTIFICATION BY MASS SPECTROMETRY [LARGE SCALE ANALYSIS]</scope>
    <source>
        <tissue>Liver</tissue>
    </source>
</reference>
<reference key="26">
    <citation type="journal article" date="2014" name="Nature">
        <title>Quantitative proteomics identifies NCOA4 as the cargo receptor mediating ferritinophagy.</title>
        <authorList>
            <person name="Mancias J.D."/>
            <person name="Wang X."/>
            <person name="Gygi S.P."/>
            <person name="Harper J.W."/>
            <person name="Kimmelman A.C."/>
        </authorList>
    </citation>
    <scope>FUNCTION</scope>
    <scope>INTERACTION WITH NCOA4</scope>
    <scope>SUBCELLULAR LOCATION</scope>
</reference>
<reference key="27">
    <citation type="journal article" date="2015" name="Proteomics">
        <title>N-terminome analysis of the human mitochondrial proteome.</title>
        <authorList>
            <person name="Vaca Jacome A.S."/>
            <person name="Rabilloud T."/>
            <person name="Schaeffer-Reiss C."/>
            <person name="Rompais M."/>
            <person name="Ayoub D."/>
            <person name="Lane L."/>
            <person name="Bairoch A."/>
            <person name="Van Dorsselaer A."/>
            <person name="Carapito C."/>
        </authorList>
    </citation>
    <scope>IDENTIFICATION BY MASS SPECTROMETRY [LARGE SCALE ANALYSIS]</scope>
</reference>
<reference key="28">
    <citation type="journal article" date="2015" name="Elife">
        <title>Ferritinophagy via NCOA4 is required for erythropoiesis and is regulated by iron dependent HERC2-mediated proteolysis.</title>
        <authorList>
            <person name="Mancias J.D."/>
            <person name="Pontano Vaites L."/>
            <person name="Nissim S."/>
            <person name="Biancur D.E."/>
            <person name="Kim A.J."/>
            <person name="Wang X."/>
            <person name="Liu Y."/>
            <person name="Goessling W."/>
            <person name="Kimmelman A.C."/>
            <person name="Harper J.W."/>
        </authorList>
    </citation>
    <scope>FUNCTION</scope>
    <scope>SUBCELLULAR LOCATION</scope>
    <scope>MUTAGENESIS OF ARG-23</scope>
</reference>
<reference key="29">
    <citation type="journal article" date="2023" name="HGG Adv.">
        <title>Heterozygous Nonsense Variants in the Ferritin Heavy Chain Gene FTH1 Cause a Neuroferritinopathy.</title>
        <authorList>
            <person name="Shieh J.T."/>
            <person name="Tintos-Hernandez J.A."/>
            <person name="Murali C.N."/>
            <person name="Penon-Portmann M."/>
            <person name="Flores-Mendez M."/>
            <person name="Santana A."/>
            <person name="Bulos J.A."/>
            <person name="Du K."/>
            <person name="Dupuis L."/>
            <person name="Damseh N."/>
            <person name="Mendoza-Londono R."/>
            <person name="Berera C."/>
            <person name="Lee J.C."/>
            <person name="Phillips J.J."/>
            <person name="Alves C.A.P.F."/>
            <person name="Dmochowski I.J."/>
            <person name="Ortiz-Gonzalez X.R."/>
        </authorList>
    </citation>
    <scope>INVOLVEMENT IN NBIA9</scope>
</reference>
<reference evidence="11" key="30">
    <citation type="journal article" date="1991" name="Nature">
        <title>Solving the structure of human H ferritin by genetically engineering intermolecular crystal contacts.</title>
        <authorList>
            <person name="Lawson D.M."/>
            <person name="Artymiuk P.J."/>
            <person name="Yewdall S.J."/>
            <person name="Smith J.M.A."/>
            <person name="Livingstone J.C."/>
            <person name="Treffry A."/>
            <person name="Luzzago A."/>
            <person name="Levi S."/>
            <person name="Arosio P."/>
            <person name="Cesarini G."/>
            <person name="Thomas C.D."/>
            <person name="Shaw W.V."/>
            <person name="Harrison P.M."/>
        </authorList>
    </citation>
    <scope>X-RAY CRYSTALLOGRAPHY (2.4 ANGSTROMS) IN COMPLEX WITH IRON</scope>
</reference>
<reference evidence="12" key="31">
    <citation type="journal article" date="1997" name="J. Mol. Biol.">
        <title>Comparison of the three-dimensional structures of recombinant human H and horse L ferritins at high resolution.</title>
        <authorList>
            <person name="Hempstead P.D."/>
            <person name="Yewdall S.J."/>
            <person name="Fernie A.R."/>
            <person name="Lawson D.M."/>
            <person name="Artymiuk P.J."/>
            <person name="Rice D.W."/>
            <person name="Ford G.C."/>
            <person name="Harrison P.M."/>
        </authorList>
    </citation>
    <scope>X-RAY CRYSTALLOGRAPHY (1.9 ANGSTROMS)</scope>
    <scope>SUBUNIT</scope>
</reference>
<evidence type="ECO:0000250" key="1">
    <source>
        <dbReference type="UniProtKB" id="P09528"/>
    </source>
</evidence>
<evidence type="ECO:0000255" key="2">
    <source>
        <dbReference type="PROSITE-ProRule" id="PRU00085"/>
    </source>
</evidence>
<evidence type="ECO:0000269" key="3">
    <source>
    </source>
</evidence>
<evidence type="ECO:0000269" key="4">
    <source>
    </source>
</evidence>
<evidence type="ECO:0000269" key="5">
    <source>
    </source>
</evidence>
<evidence type="ECO:0000269" key="6">
    <source>
    </source>
</evidence>
<evidence type="ECO:0000269" key="7">
    <source>
    </source>
</evidence>
<evidence type="ECO:0000269" key="8">
    <source>
    </source>
</evidence>
<evidence type="ECO:0000269" key="9">
    <source>
    </source>
</evidence>
<evidence type="ECO:0000305" key="10"/>
<evidence type="ECO:0007744" key="11">
    <source>
        <dbReference type="PDB" id="1FHA"/>
    </source>
</evidence>
<evidence type="ECO:0007744" key="12">
    <source>
        <dbReference type="PDB" id="2FHA"/>
    </source>
</evidence>
<evidence type="ECO:0007744" key="13">
    <source>
    </source>
</evidence>
<evidence type="ECO:0007744" key="14">
    <source>
    </source>
</evidence>
<evidence type="ECO:0007744" key="15">
    <source>
    </source>
</evidence>
<evidence type="ECO:0007744" key="16">
    <source>
    </source>
</evidence>
<evidence type="ECO:0007744" key="17">
    <source>
    </source>
</evidence>
<evidence type="ECO:0007744" key="18">
    <source>
    </source>
</evidence>
<evidence type="ECO:0007829" key="19">
    <source>
        <dbReference type="PDB" id="5UP8"/>
    </source>
</evidence>
<evidence type="ECO:0007829" key="20">
    <source>
        <dbReference type="PDB" id="6B8F"/>
    </source>
</evidence>